<comment type="function">
    <text evidence="2 7 15 17 20 25">Cell adhesion molecule which is required for leukocyte transendothelial migration (TEM) under most inflammatory conditions (PubMed:17580308, PubMed:19342684). Tyr-690 plays a critical role in TEM and is required for efficient trafficking of PECAM1 to and from the lateral border recycling compartment (LBRC) and is also essential for the LBRC membrane to be targeted around migrating leukocytes (PubMed:19342684). Trans-homophilic interaction may play a role in endothelial cell-cell adhesion via cell junctions (PubMed:27958302). Heterophilic interaction with CD177 plays a role in transendothelial migration of neutrophils (PubMed:17580308). Homophilic ligation of PECAM1 prevents macrophage-mediated phagocytosis of neighboring viable leukocytes by transmitting a detachment signal (PubMed:12110892). Promotes macrophage-mediated phagocytosis of apoptotic leukocytes by tethering them to the phagocytic cells; PECAM1-mediated detachment signal appears to be disabled in apoptotic leukocytes (PubMed:12110892). Modulates bradykinin receptor BDKRB2 activation (PubMed:18672896). Regulates bradykinin- and hyperosmotic shock-induced ERK1/2 activation in endothelial cells (PubMed:18672896). Induces susceptibility to atherosclerosis (By similarity).</text>
</comment>
<comment type="function">
    <molecule>Isoform Delta15</molecule>
    <text evidence="16">Does not protect against apoptosis.</text>
</comment>
<comment type="subunit">
    <text evidence="1 15 16 17 20 24 25">Trans-homodimer (via Ig-like C2-type 1 and Ig-like C2-type 2 domains); trans-homodimerization is required for cell-cell interaction (PubMed:26702061, PubMed:27958302). Forms a complex with BDKRB2 and GNAQ (PubMed:18672896). Interacts with BDKRB2 and GNAQ (PubMed:18672896). Interacts with PTPN11; Tyr-713 is critical for PTPN11 recruitment (PubMed:18388311, PubMed:19342684). Interacts with FER (By similarity). Interacts (via Ig-like C2-type domain 6) with CD177; the interaction is Ca(2+)-dependent; the interaction is direct (PubMed:17580308).</text>
</comment>
<comment type="interaction">
    <interactant intactId="EBI-716404">
        <id>P16284</id>
    </interactant>
    <interactant intactId="EBI-18899653">
        <id>Q6DHV7-2</id>
        <label>ADAL</label>
    </interactant>
    <organismsDiffer>false</organismsDiffer>
    <experiments>3</experiments>
</comment>
<comment type="interaction">
    <interactant intactId="EBI-716404">
        <id>P16284</id>
    </interactant>
    <interactant intactId="EBI-25838028">
        <id>Q8N302-2</id>
        <label>AGGF1</label>
    </interactant>
    <organismsDiffer>false</organismsDiffer>
    <experiments>3</experiments>
</comment>
<comment type="interaction">
    <interactant intactId="EBI-716404">
        <id>P16284</id>
    </interactant>
    <interactant intactId="EBI-1056291">
        <id>P54819</id>
        <label>AK2</label>
    </interactant>
    <organismsDiffer>false</organismsDiffer>
    <experiments>3</experiments>
</comment>
<comment type="interaction">
    <interactant intactId="EBI-716404">
        <id>P16284</id>
    </interactant>
    <interactant intactId="EBI-12067760">
        <id>P61966-2</id>
        <label>AP1S1</label>
    </interactant>
    <organismsDiffer>false</organismsDiffer>
    <experiments>3</experiments>
</comment>
<comment type="interaction">
    <interactant intactId="EBI-716404">
        <id>P16284</id>
    </interactant>
    <interactant intactId="EBI-10254793">
        <id>Q6XD76</id>
        <label>ASCL4</label>
    </interactant>
    <organismsDiffer>false</organismsDiffer>
    <experiments>3</experiments>
</comment>
<comment type="interaction">
    <interactant intactId="EBI-716404">
        <id>P16284</id>
    </interactant>
    <interactant intactId="EBI-7105206">
        <id>Q9UMX3</id>
        <label>BOK</label>
    </interactant>
    <organismsDiffer>false</organismsDiffer>
    <experiments>3</experiments>
</comment>
<comment type="interaction">
    <interactant intactId="EBI-716404">
        <id>P16284</id>
    </interactant>
    <interactant intactId="EBI-10178113">
        <id>Q96G97-4</id>
        <label>BSCL2</label>
    </interactant>
    <organismsDiffer>false</organismsDiffer>
    <experiments>3</experiments>
</comment>
<comment type="interaction">
    <interactant intactId="EBI-716404">
        <id>P16284</id>
    </interactant>
    <interactant intactId="EBI-747505">
        <id>Q8TAB5</id>
        <label>C1orf216</label>
    </interactant>
    <organismsDiffer>false</organismsDiffer>
    <experiments>3</experiments>
</comment>
<comment type="interaction">
    <interactant intactId="EBI-716404">
        <id>P16284</id>
    </interactant>
    <interactant intactId="EBI-1383687">
        <id>Q9UQM7</id>
        <label>CAMK2A</label>
    </interactant>
    <organismsDiffer>false</organismsDiffer>
    <experiments>3</experiments>
</comment>
<comment type="interaction">
    <interactant intactId="EBI-716404">
        <id>P16284</id>
    </interactant>
    <interactant intactId="EBI-744556">
        <id>Q96HB5</id>
        <label>CCDC120</label>
    </interactant>
    <organismsDiffer>false</organismsDiffer>
    <experiments>3</experiments>
</comment>
<comment type="interaction">
    <interactant intactId="EBI-716404">
        <id>P16284</id>
    </interactant>
    <interactant intactId="EBI-744045">
        <id>Q9Y3D0</id>
        <label>CIAO2B</label>
    </interactant>
    <organismsDiffer>false</organismsDiffer>
    <experiments>3</experiments>
</comment>
<comment type="interaction">
    <interactant intactId="EBI-716404">
        <id>P16284</id>
    </interactant>
    <interactant intactId="EBI-743073">
        <id>O75175</id>
        <label>CNOT3</label>
    </interactant>
    <organismsDiffer>false</organismsDiffer>
    <experiments>3</experiments>
</comment>
<comment type="interaction">
    <interactant intactId="EBI-716404">
        <id>P16284</id>
    </interactant>
    <interactant intactId="EBI-715104">
        <id>Q9NX09</id>
        <label>DDIT4</label>
    </interactant>
    <organismsDiffer>false</organismsDiffer>
    <experiments>3</experiments>
</comment>
<comment type="interaction">
    <interactant intactId="EBI-716404">
        <id>P16284</id>
    </interactant>
    <interactant intactId="EBI-20894690">
        <id>P49184</id>
        <label>DNASE1L1</label>
    </interactant>
    <organismsDiffer>false</organismsDiffer>
    <experiments>3</experiments>
</comment>
<comment type="interaction">
    <interactant intactId="EBI-716404">
        <id>P16284</id>
    </interactant>
    <interactant intactId="EBI-372173">
        <id>O77932</id>
        <label>DXO</label>
    </interactant>
    <organismsDiffer>false</organismsDiffer>
    <experiments>3</experiments>
</comment>
<comment type="interaction">
    <interactant intactId="EBI-716404">
        <id>P16284</id>
    </interactant>
    <interactant intactId="EBI-3924130">
        <id>Q99944</id>
        <label>EGFL8</label>
    </interactant>
    <organismsDiffer>false</organismsDiffer>
    <experiments>3</experiments>
</comment>
<comment type="interaction">
    <interactant intactId="EBI-716404">
        <id>P16284</id>
    </interactant>
    <interactant intactId="EBI-10213520">
        <id>Q6NXG1</id>
        <label>ESRP1</label>
    </interactant>
    <organismsDiffer>false</organismsDiffer>
    <experiments>3</experiments>
</comment>
<comment type="interaction">
    <interactant intactId="EBI-716404">
        <id>P16284</id>
    </interactant>
    <interactant intactId="EBI-9089567">
        <id>Q99504</id>
        <label>EYA3</label>
    </interactant>
    <organismsDiffer>false</organismsDiffer>
    <experiments>3</experiments>
</comment>
<comment type="interaction">
    <interactant intactId="EBI-716404">
        <id>P16284</id>
    </interactant>
    <interactant intactId="EBI-11793142">
        <id>Q96GL9</id>
        <label>FAM163A</label>
    </interactant>
    <organismsDiffer>false</organismsDiffer>
    <experiments>3</experiments>
</comment>
<comment type="interaction">
    <interactant intactId="EBI-716404">
        <id>P16284</id>
    </interactant>
    <interactant intactId="EBI-81610">
        <id>O15287</id>
        <label>FANCG</label>
    </interactant>
    <organismsDiffer>false</organismsDiffer>
    <experiments>3</experiments>
</comment>
<comment type="interaction">
    <interactant intactId="EBI-716404">
        <id>P16284</id>
    </interactant>
    <interactant intactId="EBI-744302">
        <id>P14136</id>
        <label>GFAP</label>
    </interactant>
    <organismsDiffer>false</organismsDiffer>
    <experiments>3</experiments>
</comment>
<comment type="interaction">
    <interactant intactId="EBI-716404">
        <id>P16284</id>
    </interactant>
    <interactant intactId="EBI-20835942">
        <id>Q4G1C9-2</id>
        <label>GLIPR1L2</label>
    </interactant>
    <organismsDiffer>false</organismsDiffer>
    <experiments>3</experiments>
</comment>
<comment type="interaction">
    <interactant intactId="EBI-716404">
        <id>P16284</id>
    </interactant>
    <interactant intactId="EBI-3957665">
        <id>Q96LI6</id>
        <label>HSFY2</label>
    </interactant>
    <organismsDiffer>false</organismsDiffer>
    <experiments>3</experiments>
</comment>
<comment type="interaction">
    <interactant intactId="EBI-716404">
        <id>P16284</id>
    </interactant>
    <interactant intactId="EBI-715695">
        <id>O75874</id>
        <label>IDH1</label>
    </interactant>
    <organismsDiffer>false</organismsDiffer>
    <experiments>3</experiments>
</comment>
<comment type="interaction">
    <interactant intactId="EBI-716404">
        <id>P16284</id>
    </interactant>
    <interactant intactId="EBI-6509505">
        <id>Q0VD86</id>
        <label>INCA1</label>
    </interactant>
    <organismsDiffer>false</organismsDiffer>
    <experiments>3</experiments>
</comment>
<comment type="interaction">
    <interactant intactId="EBI-716404">
        <id>P16284</id>
    </interactant>
    <interactant intactId="EBI-702484">
        <id>P14923</id>
        <label>JUP</label>
    </interactant>
    <organismsDiffer>false</organismsDiffer>
    <experiments>7</experiments>
</comment>
<comment type="interaction">
    <interactant intactId="EBI-716404">
        <id>P16284</id>
    </interactant>
    <interactant intactId="EBI-739493">
        <id>Q6ZU52</id>
        <label>KIAA0408</label>
    </interactant>
    <organismsDiffer>false</organismsDiffer>
    <experiments>3</experiments>
</comment>
<comment type="interaction">
    <interactant intactId="EBI-716404">
        <id>P16284</id>
    </interactant>
    <interactant intactId="EBI-750770">
        <id>Q96E93</id>
        <label>KLRG1</label>
    </interactant>
    <organismsDiffer>false</organismsDiffer>
    <experiments>3</experiments>
</comment>
<comment type="interaction">
    <interactant intactId="EBI-716404">
        <id>P16284</id>
    </interactant>
    <interactant intactId="EBI-715385">
        <id>Q6IAA8</id>
        <label>LAMTOR1</label>
    </interactant>
    <organismsDiffer>false</organismsDiffer>
    <experiments>3</experiments>
</comment>
<comment type="interaction">
    <interactant intactId="EBI-716404">
        <id>P16284</id>
    </interactant>
    <interactant intactId="EBI-9088686">
        <id>Q14847-2</id>
        <label>LASP1</label>
    </interactant>
    <organismsDiffer>false</organismsDiffer>
    <experiments>3</experiments>
</comment>
<comment type="interaction">
    <interactant intactId="EBI-716404">
        <id>P16284</id>
    </interactant>
    <interactant intactId="EBI-1048875">
        <id>P09382</id>
        <label>LGALS1</label>
    </interactant>
    <organismsDiffer>false</organismsDiffer>
    <experiments>4</experiments>
</comment>
<comment type="interaction">
    <interactant intactId="EBI-716404">
        <id>P16284</id>
    </interactant>
    <interactant intactId="EBI-25830459">
        <id>Q6ZQX7-4</id>
        <label>LIAT1</label>
    </interactant>
    <organismsDiffer>false</organismsDiffer>
    <experiments>3</experiments>
</comment>
<comment type="interaction">
    <interactant intactId="EBI-716404">
        <id>P16284</id>
    </interactant>
    <interactant intactId="EBI-10182361">
        <id>Q9NS73-5</id>
        <label>MBIP</label>
    </interactant>
    <organismsDiffer>false</organismsDiffer>
    <experiments>3</experiments>
</comment>
<comment type="interaction">
    <interactant intactId="EBI-716404">
        <id>P16284</id>
    </interactant>
    <interactant intactId="EBI-11337904">
        <id>Q14728</id>
        <label>MFSD10</label>
    </interactant>
    <organismsDiffer>false</organismsDiffer>
    <experiments>3</experiments>
</comment>
<comment type="interaction">
    <interactant intactId="EBI-716404">
        <id>P16284</id>
    </interactant>
    <interactant intactId="EBI-5325200">
        <id>Q13405</id>
        <label>MRPL49</label>
    </interactant>
    <organismsDiffer>false</organismsDiffer>
    <experiments>3</experiments>
</comment>
<comment type="interaction">
    <interactant intactId="EBI-716404">
        <id>P16284</id>
    </interactant>
    <interactant intactId="EBI-10178578">
        <id>I6L9F6</id>
        <label>NEFL</label>
    </interactant>
    <organismsDiffer>false</organismsDiffer>
    <experiments>3</experiments>
</comment>
<comment type="interaction">
    <interactant intactId="EBI-716404">
        <id>P16284</id>
    </interactant>
    <interactant intactId="EBI-18212103">
        <id>Q9GZQ6</id>
        <label>NPFFR1</label>
    </interactant>
    <organismsDiffer>false</organismsDiffer>
    <experiments>3</experiments>
</comment>
<comment type="interaction">
    <interactant intactId="EBI-716404">
        <id>P16284</id>
    </interactant>
    <interactant intactId="EBI-743459">
        <id>Q9HB63</id>
        <label>NTN4</label>
    </interactant>
    <organismsDiffer>false</organismsDiffer>
    <experiments>3</experiments>
</comment>
<comment type="interaction">
    <interactant intactId="EBI-716404">
        <id>P16284</id>
    </interactant>
    <interactant intactId="EBI-741896">
        <id>Q9P286</id>
        <label>PAK5</label>
    </interactant>
    <organismsDiffer>false</organismsDiffer>
    <experiments>3</experiments>
</comment>
<comment type="interaction">
    <interactant intactId="EBI-716404">
        <id>P16284</id>
    </interactant>
    <interactant intactId="EBI-8059854">
        <id>Q16549</id>
        <label>PCSK7</label>
    </interactant>
    <organismsDiffer>false</organismsDiffer>
    <experiments>3</experiments>
</comment>
<comment type="interaction">
    <interactant intactId="EBI-716404">
        <id>P16284</id>
    </interactant>
    <interactant intactId="EBI-18063495">
        <id>Q8TBJ4</id>
        <label>PLPPR1</label>
    </interactant>
    <organismsDiffer>false</organismsDiffer>
    <experiments>3</experiments>
</comment>
<comment type="interaction">
    <interactant intactId="EBI-716404">
        <id>P16284</id>
    </interactant>
    <interactant intactId="EBI-10171633">
        <id>Q96PV4</id>
        <label>PNMA5</label>
    </interactant>
    <organismsDiffer>false</organismsDiffer>
    <experiments>3</experiments>
</comment>
<comment type="interaction">
    <interactant intactId="EBI-716404">
        <id>P16284</id>
    </interactant>
    <interactant intactId="EBI-2557132">
        <id>Q8NBT0</id>
        <label>POC1A</label>
    </interactant>
    <organismsDiffer>false</organismsDiffer>
    <experiments>3</experiments>
</comment>
<comment type="interaction">
    <interactant intactId="EBI-716404">
        <id>P16284</id>
    </interactant>
    <interactant intactId="EBI-743880">
        <id>Q8WUY3</id>
        <label>PRUNE2</label>
    </interactant>
    <organismsDiffer>false</organismsDiffer>
    <experiments>3</experiments>
</comment>
<comment type="interaction">
    <interactant intactId="EBI-716404">
        <id>P16284</id>
    </interactant>
    <interactant intactId="EBI-297779">
        <id>Q06124</id>
        <label>PTPN11</label>
    </interactant>
    <organismsDiffer>false</organismsDiffer>
    <experiments>7</experiments>
</comment>
<comment type="interaction">
    <interactant intactId="EBI-716404">
        <id>P16284</id>
    </interactant>
    <interactant intactId="EBI-78260">
        <id>P29350</id>
        <label>PTPN6</label>
    </interactant>
    <organismsDiffer>false</organismsDiffer>
    <experiments>4</experiments>
</comment>
<comment type="interaction">
    <interactant intactId="EBI-716404">
        <id>P16284</id>
    </interactant>
    <interactant intactId="EBI-740272">
        <id>Q96I25</id>
        <label>RBM17</label>
    </interactant>
    <organismsDiffer>false</organismsDiffer>
    <experiments>3</experiments>
</comment>
<comment type="interaction">
    <interactant intactId="EBI-716404">
        <id>P16284</id>
    </interactant>
    <interactant intactId="EBI-3909436">
        <id>Q9UJD0</id>
        <label>RIMS3</label>
    </interactant>
    <organismsDiffer>false</organismsDiffer>
    <experiments>3</experiments>
</comment>
<comment type="interaction">
    <interactant intactId="EBI-716404">
        <id>P16284</id>
    </interactant>
    <interactant intactId="EBI-356793">
        <id>P61513</id>
        <label>RPL37A</label>
    </interactant>
    <organismsDiffer>false</organismsDiffer>
    <experiments>3</experiments>
</comment>
<comment type="interaction">
    <interactant intactId="EBI-716404">
        <id>P16284</id>
    </interactant>
    <interactant intactId="EBI-523558">
        <id>Q8NC51</id>
        <label>SERBP1</label>
    </interactant>
    <organismsDiffer>false</organismsDiffer>
    <experiments>3</experiments>
</comment>
<comment type="interaction">
    <interactant intactId="EBI-716404">
        <id>P16284</id>
    </interactant>
    <interactant intactId="EBI-2902468">
        <id>P12757</id>
        <label>SKIL</label>
    </interactant>
    <organismsDiffer>false</organismsDiffer>
    <experiments>3</experiments>
</comment>
<comment type="interaction">
    <interactant intactId="EBI-716404">
        <id>P16284</id>
    </interactant>
    <interactant intactId="EBI-21504521">
        <id>Q8NCS7</id>
        <label>SLC44A5</label>
    </interactant>
    <organismsDiffer>false</organismsDiffer>
    <experiments>3</experiments>
</comment>
<comment type="interaction">
    <interactant intactId="EBI-716404">
        <id>P16284</id>
    </interactant>
    <interactant intactId="EBI-358419">
        <id>Q12824</id>
        <label>SMARCB1</label>
    </interactant>
    <organismsDiffer>false</organismsDiffer>
    <experiments>3</experiments>
</comment>
<comment type="interaction">
    <interactant intactId="EBI-716404">
        <id>P16284</id>
    </interactant>
    <interactant intactId="EBI-12336127">
        <id>Q7Z614-3</id>
        <label>SNX20</label>
    </interactant>
    <organismsDiffer>false</organismsDiffer>
    <experiments>3</experiments>
</comment>
<comment type="interaction">
    <interactant intactId="EBI-716404">
        <id>P16284</id>
    </interactant>
    <interactant intactId="EBI-2510414">
        <id>Q8IUW3</id>
        <label>SPATA2L</label>
    </interactant>
    <organismsDiffer>false</organismsDiffer>
    <experiments>3</experiments>
</comment>
<comment type="interaction">
    <interactant intactId="EBI-716404">
        <id>P16284</id>
    </interactant>
    <interactant intactId="EBI-1055655">
        <id>Q08AE8</id>
        <label>SPIRE1</label>
    </interactant>
    <organismsDiffer>false</organismsDiffer>
    <experiments>3</experiments>
</comment>
<comment type="interaction">
    <interactant intactId="EBI-716404">
        <id>P16284</id>
    </interactant>
    <interactant intactId="EBI-2659201">
        <id>Q96BD6</id>
        <label>SPSB1</label>
    </interactant>
    <organismsDiffer>false</organismsDiffer>
    <experiments>3</experiments>
</comment>
<comment type="interaction">
    <interactant intactId="EBI-716404">
        <id>P16284</id>
    </interactant>
    <interactant intactId="EBI-2323209">
        <id>Q99619</id>
        <label>SPSB2</label>
    </interactant>
    <organismsDiffer>false</organismsDiffer>
    <experiments>3</experiments>
</comment>
<comment type="interaction">
    <interactant intactId="EBI-716404">
        <id>P16284</id>
    </interactant>
    <interactant intactId="EBI-621482">
        <id>P12931</id>
        <label>SRC</label>
    </interactant>
    <organismsDiffer>false</organismsDiffer>
    <experiments>3</experiments>
</comment>
<comment type="interaction">
    <interactant intactId="EBI-716404">
        <id>P16284</id>
    </interactant>
    <interactant intactId="EBI-719212">
        <id>P46977</id>
        <label>STT3A</label>
    </interactant>
    <organismsDiffer>false</organismsDiffer>
    <experiments>3</experiments>
</comment>
<comment type="interaction">
    <interactant intactId="EBI-716404">
        <id>P16284</id>
    </interactant>
    <interactant intactId="EBI-11285923">
        <id>Q9H7C4</id>
        <label>SYNC</label>
    </interactant>
    <organismsDiffer>false</organismsDiffer>
    <experiments>3</experiments>
</comment>
<comment type="interaction">
    <interactant intactId="EBI-716404">
        <id>P16284</id>
    </interactant>
    <interactant intactId="EBI-11123832">
        <id>O60506-4</id>
        <label>SYNCRIP</label>
    </interactant>
    <organismsDiffer>false</organismsDiffer>
    <experiments>3</experiments>
</comment>
<comment type="interaction">
    <interactant intactId="EBI-716404">
        <id>P16284</id>
    </interactant>
    <interactant intactId="EBI-954089">
        <id>O15273</id>
        <label>TCAP</label>
    </interactant>
    <organismsDiffer>false</organismsDiffer>
    <experiments>3</experiments>
</comment>
<comment type="interaction">
    <interactant intactId="EBI-716404">
        <id>P16284</id>
    </interactant>
    <interactant intactId="EBI-12000326">
        <id>P15923-3</id>
        <label>TCF3</label>
    </interactant>
    <organismsDiffer>false</organismsDiffer>
    <experiments>3</experiments>
</comment>
<comment type="interaction">
    <interactant intactId="EBI-716404">
        <id>P16284</id>
    </interactant>
    <interactant intactId="EBI-25832010">
        <id>Q13428-5</id>
        <label>TCOF1</label>
    </interactant>
    <organismsDiffer>false</organismsDiffer>
    <experiments>3</experiments>
</comment>
<comment type="interaction">
    <interactant intactId="EBI-716404">
        <id>P16284</id>
    </interactant>
    <interactant intactId="EBI-7684443">
        <id>Q5T1C6</id>
        <label>THEM4</label>
    </interactant>
    <organismsDiffer>false</organismsDiffer>
    <experiments>3</experiments>
</comment>
<comment type="interaction">
    <interactant intactId="EBI-716404">
        <id>P16284</id>
    </interactant>
    <interactant intactId="EBI-9088037">
        <id>Q7Z403</id>
        <label>TMC6</label>
    </interactant>
    <organismsDiffer>false</organismsDiffer>
    <experiments>3</experiments>
</comment>
<comment type="interaction">
    <interactant intactId="EBI-716404">
        <id>P16284</id>
    </interactant>
    <interactant intactId="EBI-25833898">
        <id>Q96JJ7-2</id>
        <label>TMX3</label>
    </interactant>
    <organismsDiffer>false</organismsDiffer>
    <experiments>3</experiments>
</comment>
<comment type="interaction">
    <interactant intactId="EBI-716404">
        <id>P16284</id>
    </interactant>
    <interactant intactId="EBI-396540">
        <id>Q12888</id>
        <label>TP53BP1</label>
    </interactant>
    <organismsDiffer>false</organismsDiffer>
    <experiments>3</experiments>
</comment>
<comment type="interaction">
    <interactant intactId="EBI-716404">
        <id>P16284</id>
    </interactant>
    <interactant intactId="EBI-9088812">
        <id>Q5VYS8-5</id>
        <label>TUT7</label>
    </interactant>
    <organismsDiffer>false</organismsDiffer>
    <experiments>3</experiments>
</comment>
<comment type="interaction">
    <interactant intactId="EBI-716404">
        <id>P16284</id>
    </interactant>
    <interactant intactId="EBI-2107455">
        <id>Q08AM6</id>
        <label>VAC14</label>
    </interactant>
    <organismsDiffer>false</organismsDiffer>
    <experiments>3</experiments>
</comment>
<comment type="interaction">
    <interactant intactId="EBI-716404">
        <id>P16284</id>
    </interactant>
    <interactant intactId="EBI-373380">
        <id>Q9H270</id>
        <label>VPS11</label>
    </interactant>
    <organismsDiffer>false</organismsDiffer>
    <experiments>3</experiments>
</comment>
<comment type="interaction">
    <interactant intactId="EBI-716404">
        <id>P16284</id>
    </interactant>
    <interactant intactId="EBI-3441235">
        <id>Q5JSH3</id>
        <label>WDR44</label>
    </interactant>
    <organismsDiffer>false</organismsDiffer>
    <experiments>3</experiments>
</comment>
<comment type="interaction">
    <interactant intactId="EBI-716404">
        <id>P16284</id>
    </interactant>
    <interactant intactId="EBI-11745701">
        <id>P19544-6</id>
        <label>WT1</label>
    </interactant>
    <organismsDiffer>false</organismsDiffer>
    <experiments>3</experiments>
</comment>
<comment type="interaction">
    <interactant intactId="EBI-716404">
        <id>P16284</id>
    </interactant>
    <interactant intactId="EBI-2859943">
        <id>Q6ZSB9</id>
        <label>ZBTB49</label>
    </interactant>
    <organismsDiffer>false</organismsDiffer>
    <experiments>3</experiments>
</comment>
<comment type="interaction">
    <interactant intactId="EBI-716404">
        <id>P16284</id>
    </interactant>
    <interactant intactId="EBI-374248">
        <id>P26651</id>
        <label>ZFP36</label>
    </interactant>
    <organismsDiffer>false</organismsDiffer>
    <experiments>3</experiments>
</comment>
<comment type="interaction">
    <interactant intactId="EBI-716404">
        <id>P16284</id>
    </interactant>
    <interactant intactId="EBI-717634">
        <id>P17024</id>
        <label>ZNF20</label>
    </interactant>
    <organismsDiffer>false</organismsDiffer>
    <experiments>3</experiments>
</comment>
<comment type="interaction">
    <interactant intactId="EBI-716404">
        <id>P16284</id>
    </interactant>
    <interactant intactId="EBI-22013570">
        <id>Q9BQ29</id>
    </interactant>
    <organismsDiffer>false</organismsDiffer>
    <experiments>3</experiments>
</comment>
<comment type="subcellular location">
    <subcellularLocation>
        <location evidence="15">Cell membrane</location>
        <topology evidence="31">Single-pass type I membrane protein</topology>
    </subcellularLocation>
    <text evidence="15">Cell surface expression on neutrophils is down-regulated upon fMLP or CXCL8/IL8-mediated stimulation.</text>
</comment>
<comment type="subcellular location">
    <molecule>Isoform Long</molecule>
    <subcellularLocation>
        <location evidence="16 20">Cell membrane</location>
        <topology evidence="32">Single-pass type I membrane protein</topology>
    </subcellularLocation>
    <subcellularLocation>
        <location evidence="13 23">Membrane raft</location>
    </subcellularLocation>
    <subcellularLocation>
        <location evidence="16">Cell junction</location>
    </subcellularLocation>
    <text evidence="20">Localizes to the lateral border recycling compartment (LBRC) and recycles from the LBRC to the junction in resting endothelial cells.</text>
</comment>
<comment type="subcellular location">
    <molecule>Isoform Delta15</molecule>
    <subcellularLocation>
        <location evidence="16">Cell junction</location>
    </subcellularLocation>
    <text>Localizes to the lateral border recycling compartment (LBRC) and recycles from the LBRC to the junction in resting endothelial cells.</text>
</comment>
<comment type="alternative products">
    <event type="alternative splicing"/>
    <isoform>
        <id>P16284-1</id>
        <name>Long</name>
        <sequence type="displayed"/>
    </isoform>
    <isoform>
        <id>P16284-2</id>
        <name>Delta12</name>
        <sequence type="described" ref="VSP_011806"/>
    </isoform>
    <isoform>
        <id>P16284-3</id>
        <name>Delta13</name>
        <sequence type="described" ref="VSP_011807"/>
    </isoform>
    <isoform>
        <id>P16284-4</id>
        <name>Delta14</name>
        <sequence type="described" ref="VSP_011809"/>
    </isoform>
    <isoform>
        <id>P16284-5</id>
        <name>Delta14-15</name>
        <sequence type="described" ref="VSP_011808 VSP_011811"/>
    </isoform>
    <isoform>
        <id>P16284-6</id>
        <name>Delta15</name>
        <sequence type="described" ref="VSP_011810 VSP_011811"/>
    </isoform>
</comment>
<comment type="tissue specificity">
    <text evidence="8 15 16 20 22">Expressed on platelets and leukocytes and is primarily concentrated at the borders between endothelial cells (PubMed:18388311, PubMed:21464369). Expressed in human umbilical vein endothelial cells (HUVECs) (at protein level) (PubMed:17580308, PubMed:19342684). Expressed on neutrophils (at protein level) (PubMed:17580308). Isoform Long predominates in all tissues examined (PubMed:12433657). Isoform Delta12 is detected only in trachea (PubMed:12433657). Isoform Delta14-15 is only detected in lung (PubMed:12433657). Isoform Delta14 is detected in all tissues examined with the strongest expression in heart (PubMed:12433657). Isoform Delta15 is expressed in brain, testis, ovary, cell surface of platelets, human umbilical vein endothelial cells (HUVECs), Jurkat T-cell leukemia, human erythroleukemia (HEL) and U-937 histiocytic lymphoma cell lines (at protein level) (PubMed:12433657, PubMed:18388311).</text>
</comment>
<comment type="domain">
    <text>The Ig-like C2-type domains 2 and 3 contribute to formation of the complex with BDKRB2 and in regulation of its activity.</text>
</comment>
<comment type="PTM">
    <text evidence="2 18 20 22 28">Phosphorylated on Ser and Tyr residues after cellular activation by src kinases (PubMed:18710921, PubMed:19342684, PubMed:21464369, PubMed:9298995). Upon activation, phosphorylated on Ser-729 which probably initiates the dissociation of the membrane-interaction segment (residues 709-729) from the cell membrane allowing the sequential phosphorylation of Tyr-713 and Tyr-690 (PubMed:21464369). Constitutively phosphorylated on Ser-734 in resting platelets (PubMed:21464369). Phosphorylated on tyrosine residues by FER and FES in response to FCER1 activation (By similarity). In endothelial cells Fyn mediates mechanical-force (stretch or pull) induced tyrosine phosphorylation (PubMed:18710921).</text>
</comment>
<comment type="PTM">
    <text evidence="13 23">Palmitoylation by ZDHHC21 is necessary for cell surface expression in endothelial cells and enrichment in membrane rafts.</text>
</comment>
<comment type="online information" name="Wikipedia">
    <link uri="https://en.wikipedia.org/wiki/CD31"/>
    <text>CD31 entry</text>
</comment>
<comment type="online information" name="Functional Glycomics Gateway - Glycan Binding">
    <link uri="http://www.functionalglycomics.org/glycomics/GBPServlet?&amp;operationType=view&amp;cbpId=cbp_hum_Itlect_265"/>
    <text>PECAM-1</text>
</comment>
<dbReference type="EMBL" id="M37780">
    <property type="protein sequence ID" value="AAA36186.1"/>
    <property type="molecule type" value="mRNA"/>
</dbReference>
<dbReference type="EMBL" id="M28526">
    <property type="protein sequence ID" value="AAA36429.1"/>
    <property type="molecule type" value="mRNA"/>
</dbReference>
<dbReference type="EMBL" id="L34657">
    <property type="protein sequence ID" value="AAA60057.1"/>
    <property type="molecule type" value="Genomic_DNA"/>
</dbReference>
<dbReference type="EMBL" id="L34631">
    <property type="protein sequence ID" value="AAA60057.1"/>
    <property type="status" value="JOINED"/>
    <property type="molecule type" value="Genomic_DNA"/>
</dbReference>
<dbReference type="EMBL" id="L34637">
    <property type="protein sequence ID" value="AAA60057.1"/>
    <property type="status" value="JOINED"/>
    <property type="molecule type" value="Genomic_DNA"/>
</dbReference>
<dbReference type="EMBL" id="L34638">
    <property type="protein sequence ID" value="AAA60057.1"/>
    <property type="status" value="JOINED"/>
    <property type="molecule type" value="Genomic_DNA"/>
</dbReference>
<dbReference type="EMBL" id="L34639">
    <property type="protein sequence ID" value="AAA60057.1"/>
    <property type="status" value="JOINED"/>
    <property type="molecule type" value="Genomic_DNA"/>
</dbReference>
<dbReference type="EMBL" id="L34640">
    <property type="protein sequence ID" value="AAA60057.1"/>
    <property type="status" value="JOINED"/>
    <property type="molecule type" value="Genomic_DNA"/>
</dbReference>
<dbReference type="EMBL" id="L34641">
    <property type="protein sequence ID" value="AAA60057.1"/>
    <property type="status" value="JOINED"/>
    <property type="molecule type" value="Genomic_DNA"/>
</dbReference>
<dbReference type="EMBL" id="L34642">
    <property type="protein sequence ID" value="AAA60057.1"/>
    <property type="status" value="JOINED"/>
    <property type="molecule type" value="Genomic_DNA"/>
</dbReference>
<dbReference type="EMBL" id="L34644">
    <property type="protein sequence ID" value="AAA60057.1"/>
    <property type="status" value="JOINED"/>
    <property type="molecule type" value="Genomic_DNA"/>
</dbReference>
<dbReference type="EMBL" id="L34645">
    <property type="protein sequence ID" value="AAA60057.1"/>
    <property type="status" value="JOINED"/>
    <property type="molecule type" value="Genomic_DNA"/>
</dbReference>
<dbReference type="EMBL" id="L34649">
    <property type="protein sequence ID" value="AAA60057.1"/>
    <property type="status" value="JOINED"/>
    <property type="molecule type" value="Genomic_DNA"/>
</dbReference>
<dbReference type="EMBL" id="L34655">
    <property type="protein sequence ID" value="AAA60057.1"/>
    <property type="status" value="JOINED"/>
    <property type="molecule type" value="Genomic_DNA"/>
</dbReference>
<dbReference type="EMBL" id="JQ287500">
    <property type="protein sequence ID" value="AFA36630.1"/>
    <property type="molecule type" value="mRNA"/>
</dbReference>
<dbReference type="EMBL" id="AK290692">
    <property type="protein sequence ID" value="BAF83381.1"/>
    <property type="molecule type" value="mRNA"/>
</dbReference>
<dbReference type="EMBL" id="AC016489">
    <property type="status" value="NOT_ANNOTATED_CDS"/>
    <property type="molecule type" value="Genomic_DNA"/>
</dbReference>
<dbReference type="EMBL" id="AC138744">
    <property type="status" value="NOT_ANNOTATED_CDS"/>
    <property type="molecule type" value="Genomic_DNA"/>
</dbReference>
<dbReference type="EMBL" id="AC234063">
    <property type="status" value="NOT_ANNOTATED_CDS"/>
    <property type="molecule type" value="Genomic_DNA"/>
</dbReference>
<dbReference type="EMBL" id="CH471109">
    <property type="protein sequence ID" value="EAW94207.1"/>
    <property type="molecule type" value="Genomic_DNA"/>
</dbReference>
<dbReference type="EMBL" id="CH471109">
    <property type="protein sequence ID" value="EAW94208.1"/>
    <property type="molecule type" value="Genomic_DNA"/>
</dbReference>
<dbReference type="EMBL" id="BC022512">
    <property type="protein sequence ID" value="AAH22512.1"/>
    <property type="molecule type" value="mRNA"/>
</dbReference>
<dbReference type="EMBL" id="BC051822">
    <property type="protein sequence ID" value="AAH51822.1"/>
    <property type="molecule type" value="mRNA"/>
</dbReference>
<dbReference type="EMBL" id="AF281287">
    <property type="protein sequence ID" value="AAF91446.1"/>
    <property type="molecule type" value="mRNA"/>
</dbReference>
<dbReference type="EMBL" id="AF281288">
    <property type="protein sequence ID" value="AAF91447.1"/>
    <property type="molecule type" value="mRNA"/>
</dbReference>
<dbReference type="EMBL" id="AF281289">
    <property type="protein sequence ID" value="AAF91448.1"/>
    <property type="molecule type" value="mRNA"/>
</dbReference>
<dbReference type="EMBL" id="AF281290">
    <property type="protein sequence ID" value="AAF91449.1"/>
    <property type="molecule type" value="mRNA"/>
</dbReference>
<dbReference type="EMBL" id="AF281291">
    <property type="protein sequence ID" value="AAF91450.1"/>
    <property type="molecule type" value="mRNA"/>
</dbReference>
<dbReference type="EMBL" id="AF281292">
    <property type="protein sequence ID" value="AAF91451.1"/>
    <property type="molecule type" value="mRNA"/>
</dbReference>
<dbReference type="EMBL" id="AF281293">
    <property type="protein sequence ID" value="AAF91452.1"/>
    <property type="molecule type" value="mRNA"/>
</dbReference>
<dbReference type="EMBL" id="AF281294">
    <property type="protein sequence ID" value="AAF91453.1"/>
    <property type="molecule type" value="mRNA"/>
</dbReference>
<dbReference type="EMBL" id="AF281295">
    <property type="protein sequence ID" value="AAF91454.1"/>
    <property type="molecule type" value="mRNA"/>
</dbReference>
<dbReference type="EMBL" id="AF281296">
    <property type="protein sequence ID" value="AAF91455.1"/>
    <property type="molecule type" value="mRNA"/>
</dbReference>
<dbReference type="EMBL" id="AF281297">
    <property type="protein sequence ID" value="AAF91456.1"/>
    <property type="molecule type" value="mRNA"/>
</dbReference>
<dbReference type="EMBL" id="AF281298">
    <property type="protein sequence ID" value="AAF91457.1"/>
    <property type="molecule type" value="mRNA"/>
</dbReference>
<dbReference type="EMBL" id="AF281299">
    <property type="protein sequence ID" value="AAF91458.1"/>
    <property type="molecule type" value="mRNA"/>
</dbReference>
<dbReference type="EMBL" id="AF281300">
    <property type="protein sequence ID" value="AAF91459.1"/>
    <property type="molecule type" value="mRNA"/>
</dbReference>
<dbReference type="EMBL" id="AF281301">
    <property type="protein sequence ID" value="AAF91460.1"/>
    <property type="molecule type" value="mRNA"/>
</dbReference>
<dbReference type="EMBL" id="AF393676">
    <property type="protein sequence ID" value="AAK84009.1"/>
    <property type="molecule type" value="mRNA"/>
</dbReference>
<dbReference type="EMBL" id="AF393677">
    <property type="protein sequence ID" value="AAK84010.1"/>
    <property type="molecule type" value="mRNA"/>
</dbReference>
<dbReference type="EMBL" id="AF393678">
    <property type="protein sequence ID" value="AAK84011.1"/>
    <property type="molecule type" value="mRNA"/>
</dbReference>
<dbReference type="EMBL" id="S66450">
    <property type="protein sequence ID" value="AAB28645.1"/>
    <property type="molecule type" value="mRNA"/>
</dbReference>
<dbReference type="CCDS" id="CCDS74132.1">
    <molecule id="P16284-1"/>
</dbReference>
<dbReference type="PIR" id="A40096">
    <property type="entry name" value="A40096"/>
</dbReference>
<dbReference type="RefSeq" id="NP_000433.4">
    <molecule id="P16284-1"/>
    <property type="nucleotide sequence ID" value="NM_000442.4"/>
</dbReference>
<dbReference type="RefSeq" id="XP_005276937.1">
    <molecule id="P16284-6"/>
    <property type="nucleotide sequence ID" value="XM_005276880.2"/>
</dbReference>
<dbReference type="RefSeq" id="XP_005276938.1">
    <molecule id="P16284-4"/>
    <property type="nucleotide sequence ID" value="XM_005276881.2"/>
</dbReference>
<dbReference type="RefSeq" id="XP_005276939.1">
    <molecule id="P16284-3"/>
    <property type="nucleotide sequence ID" value="XM_005276882.2"/>
</dbReference>
<dbReference type="RefSeq" id="XP_011523191.1">
    <property type="nucleotide sequence ID" value="XM_011524889.2"/>
</dbReference>
<dbReference type="RefSeq" id="XP_011523192.1">
    <property type="nucleotide sequence ID" value="XM_011524890.1"/>
</dbReference>
<dbReference type="RefSeq" id="XP_016880227.1">
    <property type="nucleotide sequence ID" value="XM_017024738.1"/>
</dbReference>
<dbReference type="RefSeq" id="XP_016880228.1">
    <molecule id="P16284-2"/>
    <property type="nucleotide sequence ID" value="XM_017024739.2"/>
</dbReference>
<dbReference type="RefSeq" id="XP_016880229.1">
    <property type="nucleotide sequence ID" value="XM_017024740.1"/>
</dbReference>
<dbReference type="PDB" id="2KY5">
    <property type="method" value="NMR"/>
    <property type="chains" value="A=686-738"/>
</dbReference>
<dbReference type="PDB" id="5C14">
    <property type="method" value="X-ray"/>
    <property type="resolution" value="2.80 A"/>
    <property type="chains" value="A/B=28-229"/>
</dbReference>
<dbReference type="PDB" id="5GNI">
    <property type="method" value="X-ray"/>
    <property type="resolution" value="3.01 A"/>
    <property type="chains" value="A/B=28-232"/>
</dbReference>
<dbReference type="PDBsum" id="2KY5"/>
<dbReference type="PDBsum" id="5C14"/>
<dbReference type="PDBsum" id="5GNI"/>
<dbReference type="BMRB" id="P16284"/>
<dbReference type="SMR" id="P16284"/>
<dbReference type="BioGRID" id="111201">
    <property type="interactions" value="32"/>
</dbReference>
<dbReference type="CORUM" id="P16284"/>
<dbReference type="FunCoup" id="P16284">
    <property type="interactions" value="368"/>
</dbReference>
<dbReference type="IntAct" id="P16284">
    <property type="interactions" value="97"/>
</dbReference>
<dbReference type="MINT" id="P16284"/>
<dbReference type="STRING" id="9606.ENSP00000457421"/>
<dbReference type="GlyConnect" id="1610">
    <property type="glycosylation" value="12 N-Linked glycans (5 sites)"/>
</dbReference>
<dbReference type="GlyCosmos" id="P16284">
    <property type="glycosylation" value="10 sites, 14 glycans"/>
</dbReference>
<dbReference type="GlyGen" id="P16284">
    <property type="glycosylation" value="11 sites, 83 N-linked glycans (6 sites), 1 O-linked glycan (1 site)"/>
</dbReference>
<dbReference type="iPTMnet" id="P16284"/>
<dbReference type="PhosphoSitePlus" id="P16284"/>
<dbReference type="SwissPalm" id="P16284"/>
<dbReference type="BioMuta" id="PECAM1"/>
<dbReference type="DMDM" id="129747"/>
<dbReference type="CPTAC" id="CPTAC-2602"/>
<dbReference type="CPTAC" id="CPTAC-5858"/>
<dbReference type="CPTAC" id="CPTAC-5949"/>
<dbReference type="jPOST" id="P16284"/>
<dbReference type="MassIVE" id="P16284"/>
<dbReference type="PaxDb" id="9606-ENSP00000457421"/>
<dbReference type="PeptideAtlas" id="P16284"/>
<dbReference type="ProteomicsDB" id="53335">
    <molecule id="P16284-1"/>
</dbReference>
<dbReference type="ProteomicsDB" id="53336">
    <molecule id="P16284-2"/>
</dbReference>
<dbReference type="ProteomicsDB" id="53337">
    <molecule id="P16284-3"/>
</dbReference>
<dbReference type="ProteomicsDB" id="53338">
    <molecule id="P16284-4"/>
</dbReference>
<dbReference type="ProteomicsDB" id="53339">
    <molecule id="P16284-5"/>
</dbReference>
<dbReference type="ProteomicsDB" id="53340">
    <molecule id="P16284-6"/>
</dbReference>
<dbReference type="Pumba" id="P16284"/>
<dbReference type="TopDownProteomics" id="P16284-1">
    <molecule id="P16284-1"/>
</dbReference>
<dbReference type="Antibodypedia" id="58161">
    <property type="antibodies" value="4395 antibodies from 47 providers"/>
</dbReference>
<dbReference type="DNASU" id="5175"/>
<dbReference type="Ensembl" id="ENST00000563924.6">
    <molecule id="P16284-1"/>
    <property type="protein sequence ID" value="ENSP00000457421.1"/>
    <property type="gene ID" value="ENSG00000261371.6"/>
</dbReference>
<dbReference type="GeneID" id="5175"/>
<dbReference type="KEGG" id="hsa:5175"/>
<dbReference type="MANE-Select" id="ENST00000563924.6">
    <property type="protein sequence ID" value="ENSP00000457421.1"/>
    <property type="RefSeq nucleotide sequence ID" value="NM_000442.5"/>
    <property type="RefSeq protein sequence ID" value="NP_000433.4"/>
</dbReference>
<dbReference type="AGR" id="HGNC:8823"/>
<dbReference type="CTD" id="5175"/>
<dbReference type="DisGeNET" id="5175"/>
<dbReference type="GeneCards" id="PECAM1"/>
<dbReference type="HGNC" id="HGNC:8823">
    <property type="gene designation" value="PECAM1"/>
</dbReference>
<dbReference type="HPA" id="ENSG00000261371">
    <property type="expression patterns" value="Tissue enhanced (placenta)"/>
</dbReference>
<dbReference type="MIM" id="173445">
    <property type="type" value="gene"/>
</dbReference>
<dbReference type="neXtProt" id="NX_P16284"/>
<dbReference type="OpenTargets" id="ENSG00000261371"/>
<dbReference type="PharmGKB" id="PA33167"/>
<dbReference type="VEuPathDB" id="HostDB:ENSG00000261371"/>
<dbReference type="eggNOG" id="ENOG502QW63">
    <property type="taxonomic scope" value="Eukaryota"/>
</dbReference>
<dbReference type="GeneTree" id="ENSGT01120000271918"/>
<dbReference type="InParanoid" id="P16284"/>
<dbReference type="OMA" id="FLSCDYE"/>
<dbReference type="OrthoDB" id="9950534at2759"/>
<dbReference type="PAN-GO" id="P16284">
    <property type="GO annotations" value="4 GO annotations based on evolutionary models"/>
</dbReference>
<dbReference type="PhylomeDB" id="P16284"/>
<dbReference type="PathwayCommons" id="P16284"/>
<dbReference type="Reactome" id="R-HSA-114608">
    <property type="pathway name" value="Platelet degranulation"/>
</dbReference>
<dbReference type="Reactome" id="R-HSA-202733">
    <property type="pathway name" value="Cell surface interactions at the vascular wall"/>
</dbReference>
<dbReference type="Reactome" id="R-HSA-210990">
    <property type="pathway name" value="PECAM1 interactions"/>
</dbReference>
<dbReference type="Reactome" id="R-HSA-216083">
    <property type="pathway name" value="Integrin cell surface interactions"/>
</dbReference>
<dbReference type="Reactome" id="R-HSA-432142">
    <property type="pathway name" value="Platelet sensitization by LDL"/>
</dbReference>
<dbReference type="Reactome" id="R-HSA-6798695">
    <property type="pathway name" value="Neutrophil degranulation"/>
</dbReference>
<dbReference type="Reactome" id="R-HSA-9856530">
    <property type="pathway name" value="High laminar flow shear stress activates signaling by PIEZO1 and PECAM1:CDH5:KDR in endothelial cells"/>
</dbReference>
<dbReference type="SignaLink" id="P16284"/>
<dbReference type="SIGNOR" id="P16284"/>
<dbReference type="BioGRID-ORCS" id="5175">
    <property type="hits" value="11 hits in 233 CRISPR screens"/>
</dbReference>
<dbReference type="ChiTaRS" id="PECAM1">
    <property type="organism name" value="human"/>
</dbReference>
<dbReference type="EvolutionaryTrace" id="P16284"/>
<dbReference type="GeneWiki" id="CD31"/>
<dbReference type="GenomeRNAi" id="5175"/>
<dbReference type="Pharos" id="P16284">
    <property type="development level" value="Tbio"/>
</dbReference>
<dbReference type="PRO" id="PR:P16284"/>
<dbReference type="Proteomes" id="UP000005640">
    <property type="component" value="Chromosome 17"/>
</dbReference>
<dbReference type="RNAct" id="P16284">
    <property type="molecule type" value="protein"/>
</dbReference>
<dbReference type="Bgee" id="ENSG00000261371">
    <property type="expression patterns" value="Expressed in tendon of biceps brachii and 211 other cell types or tissues"/>
</dbReference>
<dbReference type="ExpressionAtlas" id="P16284">
    <property type="expression patterns" value="baseline and differential"/>
</dbReference>
<dbReference type="GO" id="GO:0044291">
    <property type="term" value="C:cell-cell contact zone"/>
    <property type="evidence" value="ECO:0007669"/>
    <property type="project" value="Ensembl"/>
</dbReference>
<dbReference type="GO" id="GO:0005911">
    <property type="term" value="C:cell-cell junction"/>
    <property type="evidence" value="ECO:0000314"/>
    <property type="project" value="ARUK-UCL"/>
</dbReference>
<dbReference type="GO" id="GO:0005829">
    <property type="term" value="C:cytosol"/>
    <property type="evidence" value="ECO:0000314"/>
    <property type="project" value="HPA"/>
</dbReference>
<dbReference type="GO" id="GO:0009897">
    <property type="term" value="C:external side of plasma membrane"/>
    <property type="evidence" value="ECO:0000318"/>
    <property type="project" value="GO_Central"/>
</dbReference>
<dbReference type="GO" id="GO:0070062">
    <property type="term" value="C:extracellular exosome"/>
    <property type="evidence" value="ECO:0007005"/>
    <property type="project" value="UniProtKB"/>
</dbReference>
<dbReference type="GO" id="GO:0005615">
    <property type="term" value="C:extracellular space"/>
    <property type="evidence" value="ECO:0000314"/>
    <property type="project" value="BHF-UCL"/>
</dbReference>
<dbReference type="GO" id="GO:0045121">
    <property type="term" value="C:membrane raft"/>
    <property type="evidence" value="ECO:0007669"/>
    <property type="project" value="UniProtKB-SubCell"/>
</dbReference>
<dbReference type="GO" id="GO:0005730">
    <property type="term" value="C:nucleolus"/>
    <property type="evidence" value="ECO:0000314"/>
    <property type="project" value="HPA"/>
</dbReference>
<dbReference type="GO" id="GO:0005654">
    <property type="term" value="C:nucleoplasm"/>
    <property type="evidence" value="ECO:0000314"/>
    <property type="project" value="HPA"/>
</dbReference>
<dbReference type="GO" id="GO:0005886">
    <property type="term" value="C:plasma membrane"/>
    <property type="evidence" value="ECO:0000314"/>
    <property type="project" value="HPA"/>
</dbReference>
<dbReference type="GO" id="GO:0031092">
    <property type="term" value="C:platelet alpha granule membrane"/>
    <property type="evidence" value="ECO:0000304"/>
    <property type="project" value="Reactome"/>
</dbReference>
<dbReference type="GO" id="GO:0032991">
    <property type="term" value="C:protein-containing complex"/>
    <property type="evidence" value="ECO:0000314"/>
    <property type="project" value="ARUK-UCL"/>
</dbReference>
<dbReference type="GO" id="GO:0030667">
    <property type="term" value="C:secretory granule membrane"/>
    <property type="evidence" value="ECO:0000304"/>
    <property type="project" value="Reactome"/>
</dbReference>
<dbReference type="GO" id="GO:0030485">
    <property type="term" value="C:smooth muscle contractile fiber"/>
    <property type="evidence" value="ECO:0007669"/>
    <property type="project" value="Ensembl"/>
</dbReference>
<dbReference type="GO" id="GO:0042803">
    <property type="term" value="F:protein homodimerization activity"/>
    <property type="evidence" value="ECO:0000314"/>
    <property type="project" value="UniProtKB"/>
</dbReference>
<dbReference type="GO" id="GO:0004888">
    <property type="term" value="F:transmembrane signaling receptor activity"/>
    <property type="evidence" value="ECO:0000318"/>
    <property type="project" value="GO_Central"/>
</dbReference>
<dbReference type="GO" id="GO:0001525">
    <property type="term" value="P:angiogenesis"/>
    <property type="evidence" value="ECO:0007669"/>
    <property type="project" value="Ensembl"/>
</dbReference>
<dbReference type="GO" id="GO:0070830">
    <property type="term" value="P:bicellular tight junction assembly"/>
    <property type="evidence" value="ECO:0000315"/>
    <property type="project" value="ARUK-UCL"/>
</dbReference>
<dbReference type="GO" id="GO:0008037">
    <property type="term" value="P:cell recognition"/>
    <property type="evidence" value="ECO:0000304"/>
    <property type="project" value="ProtInc"/>
</dbReference>
<dbReference type="GO" id="GO:0007166">
    <property type="term" value="P:cell surface receptor signaling pathway"/>
    <property type="evidence" value="ECO:0000315"/>
    <property type="project" value="ARUK-UCL"/>
</dbReference>
<dbReference type="GO" id="GO:0098609">
    <property type="term" value="P:cell-cell adhesion"/>
    <property type="evidence" value="ECO:0000314"/>
    <property type="project" value="ARUK-UCL"/>
</dbReference>
<dbReference type="GO" id="GO:0098742">
    <property type="term" value="P:cell-cell adhesion via plasma-membrane adhesion molecules"/>
    <property type="evidence" value="ECO:0000315"/>
    <property type="project" value="UniProtKB"/>
</dbReference>
<dbReference type="GO" id="GO:0071260">
    <property type="term" value="P:cellular response to mechanical stimulus"/>
    <property type="evidence" value="ECO:0000315"/>
    <property type="project" value="ARUK-UCL"/>
</dbReference>
<dbReference type="GO" id="GO:0050982">
    <property type="term" value="P:detection of mechanical stimulus"/>
    <property type="evidence" value="ECO:0000315"/>
    <property type="project" value="ARUK-UCL"/>
</dbReference>
<dbReference type="GO" id="GO:0050904">
    <property type="term" value="P:diapedesis"/>
    <property type="evidence" value="ECO:0000314"/>
    <property type="project" value="UniProtKB"/>
</dbReference>
<dbReference type="GO" id="GO:0043542">
    <property type="term" value="P:endothelial cell migration"/>
    <property type="evidence" value="ECO:0007669"/>
    <property type="project" value="Ensembl"/>
</dbReference>
<dbReference type="GO" id="GO:0001886">
    <property type="term" value="P:endothelial cell morphogenesis"/>
    <property type="evidence" value="ECO:0007669"/>
    <property type="project" value="Ensembl"/>
</dbReference>
<dbReference type="GO" id="GO:0090673">
    <property type="term" value="P:endothelial cell-matrix adhesion"/>
    <property type="evidence" value="ECO:0007669"/>
    <property type="project" value="Ensembl"/>
</dbReference>
<dbReference type="GO" id="GO:0061028">
    <property type="term" value="P:establishment of endothelial barrier"/>
    <property type="evidence" value="ECO:0000315"/>
    <property type="project" value="ARUK-UCL"/>
</dbReference>
<dbReference type="GO" id="GO:0072011">
    <property type="term" value="P:glomerular endothelium development"/>
    <property type="evidence" value="ECO:0000270"/>
    <property type="project" value="UniProtKB"/>
</dbReference>
<dbReference type="GO" id="GO:0007156">
    <property type="term" value="P:homophilic cell adhesion via plasma membrane adhesion molecules"/>
    <property type="evidence" value="ECO:0000315"/>
    <property type="project" value="UniProtKB"/>
</dbReference>
<dbReference type="GO" id="GO:0006955">
    <property type="term" value="P:immune response"/>
    <property type="evidence" value="ECO:0000318"/>
    <property type="project" value="GO_Central"/>
</dbReference>
<dbReference type="GO" id="GO:0007159">
    <property type="term" value="P:leukocyte cell-cell adhesion"/>
    <property type="evidence" value="ECO:0000315"/>
    <property type="project" value="UniProtKB"/>
</dbReference>
<dbReference type="GO" id="GO:0035633">
    <property type="term" value="P:maintenance of blood-brain barrier"/>
    <property type="evidence" value="ECO:0000303"/>
    <property type="project" value="ARUK-UCL"/>
</dbReference>
<dbReference type="GO" id="GO:0035696">
    <property type="term" value="P:monocyte extravasation"/>
    <property type="evidence" value="ECO:0000315"/>
    <property type="project" value="ARUK-UCL"/>
</dbReference>
<dbReference type="GO" id="GO:0072672">
    <property type="term" value="P:neutrophil extravasation"/>
    <property type="evidence" value="ECO:0000315"/>
    <property type="project" value="UniProtKB"/>
</dbReference>
<dbReference type="GO" id="GO:0006909">
    <property type="term" value="P:phagocytosis"/>
    <property type="evidence" value="ECO:0000314"/>
    <property type="project" value="UniProtKB"/>
</dbReference>
<dbReference type="GO" id="GO:0030335">
    <property type="term" value="P:positive regulation of cell migration"/>
    <property type="evidence" value="ECO:0000314"/>
    <property type="project" value="ARUK-UCL"/>
</dbReference>
<dbReference type="GO" id="GO:1902533">
    <property type="term" value="P:positive regulation of intracellular signal transduction"/>
    <property type="evidence" value="ECO:0000315"/>
    <property type="project" value="ARUK-UCL"/>
</dbReference>
<dbReference type="GO" id="GO:0043410">
    <property type="term" value="P:positive regulation of MAPK cascade"/>
    <property type="evidence" value="ECO:0000315"/>
    <property type="project" value="ARUK-UCL"/>
</dbReference>
<dbReference type="GO" id="GO:0051897">
    <property type="term" value="P:positive regulation of phosphatidylinositol 3-kinase/protein kinase B signal transduction"/>
    <property type="evidence" value="ECO:0000315"/>
    <property type="project" value="ARUK-UCL"/>
</dbReference>
<dbReference type="GO" id="GO:0150107">
    <property type="term" value="P:positive regulation of protein localization to cell-cell junction"/>
    <property type="evidence" value="ECO:0000314"/>
    <property type="project" value="ARUK-UCL"/>
</dbReference>
<dbReference type="GO" id="GO:0007266">
    <property type="term" value="P:Rho protein signal transduction"/>
    <property type="evidence" value="ECO:0007669"/>
    <property type="project" value="Ensembl"/>
</dbReference>
<dbReference type="GO" id="GO:0007165">
    <property type="term" value="P:signal transduction"/>
    <property type="evidence" value="ECO:0000304"/>
    <property type="project" value="ProtInc"/>
</dbReference>
<dbReference type="GO" id="GO:0042311">
    <property type="term" value="P:vasodilation"/>
    <property type="evidence" value="ECO:0000315"/>
    <property type="project" value="ARUK-UCL"/>
</dbReference>
<dbReference type="GO" id="GO:0042060">
    <property type="term" value="P:wound healing"/>
    <property type="evidence" value="ECO:0007669"/>
    <property type="project" value="Ensembl"/>
</dbReference>
<dbReference type="FunFam" id="2.60.40.10:FF:001711">
    <property type="entry name" value="Platelet and endothelial cell adhesion molecule 1"/>
    <property type="match status" value="1"/>
</dbReference>
<dbReference type="FunFam" id="2.60.40.10:FF:001745">
    <property type="entry name" value="Platelet and endothelial cell adhesion molecule 1"/>
    <property type="match status" value="1"/>
</dbReference>
<dbReference type="FunFam" id="2.60.40.10:FF:001799">
    <property type="entry name" value="Platelet and endothelial cell adhesion molecule 1"/>
    <property type="match status" value="1"/>
</dbReference>
<dbReference type="FunFam" id="2.60.40.10:FF:001919">
    <property type="entry name" value="Platelet endothelial cell adhesion molecule"/>
    <property type="match status" value="1"/>
</dbReference>
<dbReference type="Gene3D" id="2.60.40.10">
    <property type="entry name" value="Immunoglobulins"/>
    <property type="match status" value="4"/>
</dbReference>
<dbReference type="InterPro" id="IPR007110">
    <property type="entry name" value="Ig-like_dom"/>
</dbReference>
<dbReference type="InterPro" id="IPR036179">
    <property type="entry name" value="Ig-like_dom_sf"/>
</dbReference>
<dbReference type="InterPro" id="IPR013783">
    <property type="entry name" value="Ig-like_fold"/>
</dbReference>
<dbReference type="InterPro" id="IPR050488">
    <property type="entry name" value="Ig_Fc_receptor"/>
</dbReference>
<dbReference type="InterPro" id="IPR003599">
    <property type="entry name" value="Ig_sub"/>
</dbReference>
<dbReference type="InterPro" id="IPR003598">
    <property type="entry name" value="Ig_sub2"/>
</dbReference>
<dbReference type="InterPro" id="IPR040878">
    <property type="entry name" value="IL-40-like_Ig"/>
</dbReference>
<dbReference type="PANTHER" id="PTHR11481">
    <property type="entry name" value="IMMUNOGLOBULIN FC RECEPTOR"/>
    <property type="match status" value="1"/>
</dbReference>
<dbReference type="PANTHER" id="PTHR11481:SF5">
    <property type="entry name" value="PLATELET ENDOTHELIAL CELL ADHESION MOLECULE"/>
    <property type="match status" value="1"/>
</dbReference>
<dbReference type="Pfam" id="PF13895">
    <property type="entry name" value="Ig_2"/>
    <property type="match status" value="1"/>
</dbReference>
<dbReference type="Pfam" id="PF13927">
    <property type="entry name" value="Ig_3"/>
    <property type="match status" value="1"/>
</dbReference>
<dbReference type="Pfam" id="PF17736">
    <property type="entry name" value="Ig_C17orf99"/>
    <property type="match status" value="1"/>
</dbReference>
<dbReference type="SMART" id="SM00409">
    <property type="entry name" value="IG"/>
    <property type="match status" value="5"/>
</dbReference>
<dbReference type="SMART" id="SM00408">
    <property type="entry name" value="IGc2"/>
    <property type="match status" value="3"/>
</dbReference>
<dbReference type="SUPFAM" id="SSF48726">
    <property type="entry name" value="Immunoglobulin"/>
    <property type="match status" value="5"/>
</dbReference>
<dbReference type="PROSITE" id="PS50835">
    <property type="entry name" value="IG_LIKE"/>
    <property type="match status" value="4"/>
</dbReference>
<name>PECA1_HUMAN</name>
<sequence length="738" mass="82522">MQPRWAQGATMWLGVLLTLLLCSSLEGQENSFTINSVDMKSLPDWTVQNGKNLTLQCFADVSTTSHVKPQHQMLFYKDDVLFYNISSMKSTESYFIPEVRIYDSGTYKCTVIVNNKEKTTAEYQVLVEGVPSPRVTLDKKEAIQGGIVRVNCSVPEEKAPIHFTIEKLELNEKMVKLKREKNSRDQNFVILEFPVEEQDRVLSFRCQARIISGIHMQTSESTKSELVTVTESFSTPKFHISPTGMIMEGAQLHIKCTIQVTHLAQEFPEIIIQKDKAIVAHNRHGNKAVYSVMAMVEHSGNYTCKVESSRISKVSSIVVNITELFSKPELESSFTHLDQGERLNLSCSIPGAPPANFTIQKEDTIVSQTQDFTKIASKSDSGTYICTAGIDKVVKKSNTVQIVVCEMLSQPRISYDAQFEVIKGQTIEVRCESISGTLPISYQLLKTSKVLENSTKNSNDPAVFKDNPTEDVEYQCVADNCHSHAKMLSEVLRVKVIAPVDEVQISILSSKVVESGEDIVLQCAVNEGSGPITYKFYREKEGKPFYQMTSNATQAFWTKQKASKEQEGEYYCTAFNRANHASSVPRSKILTVRVILAPWKKGLIAVVIIGVIIALLIIAAKCYFLRKAKAKQMPVEMSRPAVPLLNSNNEKMSDPNMEANSHYGHNDDVRNHAMKPINDNKEPLNSDVQYTEVQVSSAESHKDLGKKDTETVYSEVRKAVPDAVESRYSRTEGSLDGT</sequence>
<organism>
    <name type="scientific">Homo sapiens</name>
    <name type="common">Human</name>
    <dbReference type="NCBI Taxonomy" id="9606"/>
    <lineage>
        <taxon>Eukaryota</taxon>
        <taxon>Metazoa</taxon>
        <taxon>Chordata</taxon>
        <taxon>Craniata</taxon>
        <taxon>Vertebrata</taxon>
        <taxon>Euteleostomi</taxon>
        <taxon>Mammalia</taxon>
        <taxon>Eutheria</taxon>
        <taxon>Euarchontoglires</taxon>
        <taxon>Primates</taxon>
        <taxon>Haplorrhini</taxon>
        <taxon>Catarrhini</taxon>
        <taxon>Hominidae</taxon>
        <taxon>Homo</taxon>
    </lineage>
</organism>
<feature type="signal peptide">
    <location>
        <begin position="1"/>
        <end position="27"/>
    </location>
</feature>
<feature type="chain" id="PRO_0000014895" description="Platelet endothelial cell adhesion molecule">
    <location>
        <begin position="28"/>
        <end position="738"/>
    </location>
</feature>
<feature type="topological domain" description="Extracellular" evidence="3">
    <location>
        <begin position="28"/>
        <end position="601"/>
    </location>
</feature>
<feature type="transmembrane region" description="Helical" evidence="3">
    <location>
        <begin position="602"/>
        <end position="620"/>
    </location>
</feature>
<feature type="topological domain" description="Cytoplasmic" evidence="3">
    <location>
        <begin position="621"/>
        <end position="738"/>
    </location>
</feature>
<feature type="domain" description="Ig-like C2-type 1">
    <location>
        <begin position="35"/>
        <end position="121"/>
    </location>
</feature>
<feature type="domain" description="Ig-like C2-type 2">
    <location>
        <begin position="145"/>
        <end position="233"/>
    </location>
</feature>
<feature type="domain" description="Ig-like C2-type 3">
    <location>
        <begin position="236"/>
        <end position="315"/>
    </location>
</feature>
<feature type="domain" description="Ig-like C2-type 4">
    <location>
        <begin position="328"/>
        <end position="401"/>
    </location>
</feature>
<feature type="domain" description="Ig-like C2-type 5">
    <location>
        <begin position="424"/>
        <end position="493"/>
    </location>
</feature>
<feature type="domain" description="Ig-like C2-type 6">
    <location>
        <begin position="499"/>
        <end position="591"/>
    </location>
</feature>
<feature type="region of interest" description="Disordered" evidence="5">
    <location>
        <begin position="658"/>
        <end position="715"/>
    </location>
</feature>
<feature type="region of interest" description="Membrane-bound segment which detaches upon phosphorylation" evidence="22">
    <location>
        <begin position="709"/>
        <end position="729"/>
    </location>
</feature>
<feature type="region of interest" description="May play a role in cytoprotective signaling">
    <location>
        <begin position="721"/>
        <end position="738"/>
    </location>
</feature>
<feature type="short sequence motif" description="ITIM motif 1" evidence="33">
    <location>
        <begin position="688"/>
        <end position="693"/>
    </location>
</feature>
<feature type="short sequence motif" description="ITIM motif 2" evidence="33">
    <location>
        <begin position="711"/>
        <end position="716"/>
    </location>
</feature>
<feature type="compositionally biased region" description="Polar residues" evidence="5">
    <location>
        <begin position="686"/>
        <end position="698"/>
    </location>
</feature>
<feature type="compositionally biased region" description="Basic and acidic residues" evidence="5">
    <location>
        <begin position="699"/>
        <end position="715"/>
    </location>
</feature>
<feature type="modified residue" description="Phosphotyrosine; by FER" evidence="20 22">
    <location>
        <position position="690"/>
    </location>
</feature>
<feature type="modified residue" description="Phosphotyrosine; by FER" evidence="20 22 28">
    <location>
        <position position="713"/>
    </location>
</feature>
<feature type="modified residue" description="Phosphoserine" evidence="22">
    <location>
        <position position="729"/>
    </location>
</feature>
<feature type="modified residue" description="Phosphoserine" evidence="22">
    <location>
        <position position="734"/>
    </location>
</feature>
<feature type="lipid moiety-binding region" description="S-palmitoyl cysteine" evidence="13">
    <location>
        <position position="622"/>
    </location>
</feature>
<feature type="glycosylation site" description="N-linked (GlcNAc...) asparagine" evidence="24 34">
    <location>
        <position position="52"/>
    </location>
</feature>
<feature type="glycosylation site" description="N-linked (GlcNAc...) asparagine" evidence="21 24 34">
    <location>
        <position position="84"/>
    </location>
</feature>
<feature type="glycosylation site" description="N-linked (GlcNAc...) asparagine" evidence="19 24 34">
    <location>
        <position position="151"/>
    </location>
</feature>
<feature type="glycosylation site" description="N-linked (GlcNAc...) asparagine" evidence="3">
    <location>
        <position position="301"/>
    </location>
</feature>
<feature type="glycosylation site" description="N-linked (GlcNAc...) asparagine" evidence="19 21">
    <location>
        <position position="320"/>
    </location>
</feature>
<feature type="glycosylation site" description="N-linked (GlcNAc...) asparagine" evidence="3">
    <location>
        <position position="344"/>
    </location>
</feature>
<feature type="glycosylation site" description="N-linked (GlcNAc...) asparagine" evidence="3">
    <location>
        <position position="356"/>
    </location>
</feature>
<feature type="glycosylation site" description="N-linked (GlcNAc...) asparagine" evidence="19">
    <location>
        <position position="453"/>
    </location>
</feature>
<feature type="glycosylation site" description="N-linked (GlcNAc...) asparagine" evidence="21">
    <location>
        <position position="551"/>
    </location>
</feature>
<feature type="disulfide bond" evidence="4 24 25 34 35">
    <location>
        <begin position="57"/>
        <end position="109"/>
    </location>
</feature>
<feature type="disulfide bond" evidence="4 24 25 34 35">
    <location>
        <begin position="152"/>
        <end position="206"/>
    </location>
</feature>
<feature type="disulfide bond" evidence="4">
    <location>
        <begin position="256"/>
        <end position="304"/>
    </location>
</feature>
<feature type="disulfide bond" evidence="4">
    <location>
        <begin position="347"/>
        <end position="386"/>
    </location>
</feature>
<feature type="disulfide bond" evidence="4">
    <location>
        <begin position="431"/>
        <end position="476"/>
    </location>
</feature>
<feature type="disulfide bond" evidence="4">
    <location>
        <begin position="523"/>
        <end position="572"/>
    </location>
</feature>
<feature type="splice variant" id="VSP_011806" description="In isoform Delta12." evidence="31">
    <location>
        <begin position="664"/>
        <end position="681"/>
    </location>
</feature>
<feature type="splice variant" id="VSP_011807" description="In isoform Delta13." evidence="31">
    <location>
        <begin position="682"/>
        <end position="702"/>
    </location>
</feature>
<feature type="splice variant" id="VSP_011808" description="In isoform Delta14-15." evidence="31">
    <location>
        <begin position="703"/>
        <end position="729"/>
    </location>
</feature>
<feature type="splice variant" id="VSP_011809" description="In isoform Delta14." evidence="31">
    <location>
        <begin position="703"/>
        <end position="721"/>
    </location>
</feature>
<feature type="splice variant" id="VSP_011810" description="In isoform Delta15." evidence="31">
    <location>
        <begin position="722"/>
        <end position="729"/>
    </location>
</feature>
<feature type="splice variant" id="VSP_011811" description="In isoform Delta14-15 and isoform Delta15." evidence="31">
    <original>RTEGSLDGT</original>
    <variation>ENGRLP</variation>
    <location>
        <begin position="730"/>
        <end position="738"/>
    </location>
</feature>
<feature type="sequence variant" id="VAR_013145" description="In dbSNP:rs281865545." evidence="6 11 14 27">
    <original>V</original>
    <variation>L</variation>
    <location>
        <position position="125"/>
    </location>
</feature>
<feature type="sequence variant" id="VAR_059402" description="In dbSNP:rs7209607.">
    <original>C</original>
    <variation>Y</variation>
    <location>
        <position position="304"/>
    </location>
</feature>
<feature type="sequence variant" id="VAR_059403" description="In dbSNP:rs12953.">
    <original>S</original>
    <variation>I</variation>
    <location>
        <position position="563"/>
    </location>
</feature>
<feature type="sequence variant" id="VAR_059404" description="In dbSNP:rs12953." evidence="9 10 12 14 26 29 30">
    <original>S</original>
    <variation>N</variation>
    <location>
        <position position="563"/>
    </location>
</feature>
<feature type="sequence variant" id="VAR_059405" description="In dbSNP:rs1131012." evidence="9 10 12 14 29 30">
    <original>R</original>
    <variation>G</variation>
    <location>
        <position position="670"/>
    </location>
</feature>
<feature type="mutagenesis site" description="Probable loss of N-glycosylation. No effect on homophilic cell adhesion; when associated with Q-84 and Q-151." evidence="25">
    <original>N</original>
    <variation>Q</variation>
    <location>
        <position position="52"/>
    </location>
</feature>
<feature type="mutagenesis site" description="Reduced homophilic cell adhesion; when associated with E-112; E-188 and E-190." evidence="25">
    <original>L</original>
    <variation>E</variation>
    <location>
        <position position="74"/>
    </location>
</feature>
<feature type="mutagenesis site" description="Probable loss of N-glycosylation. No effect on homophilic cell adhesion; when associated with Q-52 and Q-151." evidence="25">
    <original>N</original>
    <variation>Q</variation>
    <location>
        <position position="84"/>
    </location>
</feature>
<feature type="mutagenesis site" description="Lacks homophilic binding ability and is distributed over the entire plasma membrane." evidence="20">
    <original>K</original>
    <variation>A</variation>
    <location>
        <position position="89"/>
    </location>
</feature>
<feature type="mutagenesis site" description="Reduced homophilic cell adhesion; when associated with E-74; E-188 and E-190." evidence="25">
    <original>I</original>
    <variation>E</variation>
    <location>
        <position position="112"/>
    </location>
</feature>
<feature type="mutagenesis site" description="Probable loss of N-glycosylation. No effect on homophilic cell adhesion; when associated with Q-52 and Q-84." evidence="25">
    <original>N</original>
    <variation>Q</variation>
    <location>
        <position position="151"/>
    </location>
</feature>
<feature type="mutagenesis site" description="Reduced homophilic cell adhesion; when associated with E-74; E-112 and E-190." evidence="25">
    <original>F</original>
    <variation>E</variation>
    <location>
        <position position="188"/>
    </location>
</feature>
<feature type="mutagenesis site" description="Reduced homophilic cell adhesion; when associated with E-74; E-112 and E-188." evidence="25">
    <original>I</original>
    <variation>E</variation>
    <location>
        <position position="190"/>
    </location>
</feature>
<feature type="mutagenesis site" description="6-fold decrease in association with membrane microdomains." evidence="13">
    <original>C</original>
    <variation>A</variation>
    <location>
        <position position="622"/>
    </location>
</feature>
<feature type="mutagenesis site" description="No effect on Tyr-713 phosphorylation. Inhibits targeted recycling of PECAM1 from the lateral border recycling compartment (LBRC) around transmigrating monocytes. Decreases phosphorylation. No effect on interaction with PTPN11. Loss of phosphorylation and loss of binding to PTPN11; when associated with F-713." evidence="16 20 22">
    <original>Y</original>
    <variation>F</variation>
    <location>
        <position position="690"/>
    </location>
</feature>
<feature type="mutagenesis site" description="Loss of Tyr-690 phosphorylation. Does not inhibit targeted recycling of PECAM1 from the lateral border recycling compartment (LBRC) around transmigrating monocytes. Decreases phosphorylation. Loss of interaction with PTPN11. Loss of phosphorylation and loss of binding to PTPN11; when associated with F-690." evidence="16 20 22">
    <original>Y</original>
    <variation>F</variation>
    <location>
        <position position="713"/>
    </location>
</feature>
<feature type="sequence conflict" description="In Ref. 7; BAF83381." evidence="31" ref="7">
    <original>A</original>
    <variation>T</variation>
    <location>
        <position position="6"/>
    </location>
</feature>
<feature type="sequence conflict" description="In Ref. 1." evidence="31" ref="1">
    <original>GATMW</original>
    <variation>ADV</variation>
    <location>
        <begin position="8"/>
        <end position="12"/>
    </location>
</feature>
<feature type="sequence conflict" description="In Ref. 11; AAK84009." evidence="31" ref="11">
    <original>V</original>
    <variation>M</variation>
    <location>
        <position position="80"/>
    </location>
</feature>
<feature type="sequence conflict" description="In Ref. 11; AAK84011." evidence="31" ref="11">
    <original>P</original>
    <variation>L</variation>
    <location>
        <position position="97"/>
    </location>
</feature>
<feature type="sequence conflict" description="In Ref. 11; AAF91460." evidence="31" ref="11">
    <original>E</original>
    <variation>K</variation>
    <location>
        <position position="329"/>
    </location>
</feature>
<feature type="sequence conflict" description="In Ref. 11; AAF91451." evidence="31" ref="11">
    <original>R</original>
    <variation>H</variation>
    <location>
        <position position="430"/>
    </location>
</feature>
<feature type="strand" evidence="37">
    <location>
        <begin position="32"/>
        <end position="43"/>
    </location>
</feature>
<feature type="strand" evidence="37">
    <location>
        <begin position="45"/>
        <end position="48"/>
    </location>
</feature>
<feature type="strand" evidence="37">
    <location>
        <begin position="53"/>
        <end position="64"/>
    </location>
</feature>
<feature type="strand" evidence="37">
    <location>
        <begin position="71"/>
        <end position="77"/>
    </location>
</feature>
<feature type="strand" evidence="37">
    <location>
        <begin position="80"/>
        <end position="98"/>
    </location>
</feature>
<feature type="helix" evidence="37">
    <location>
        <begin position="101"/>
        <end position="103"/>
    </location>
</feature>
<feature type="strand" evidence="37">
    <location>
        <begin position="105"/>
        <end position="115"/>
    </location>
</feature>
<feature type="strand" evidence="37">
    <location>
        <begin position="117"/>
        <end position="119"/>
    </location>
</feature>
<feature type="strand" evidence="37">
    <location>
        <begin position="123"/>
        <end position="128"/>
    </location>
</feature>
<feature type="strand" evidence="37">
    <location>
        <begin position="134"/>
        <end position="138"/>
    </location>
</feature>
<feature type="strand" evidence="38">
    <location>
        <begin position="140"/>
        <end position="142"/>
    </location>
</feature>
<feature type="strand" evidence="37">
    <location>
        <begin position="147"/>
        <end position="153"/>
    </location>
</feature>
<feature type="strand" evidence="37">
    <location>
        <begin position="161"/>
        <end position="169"/>
    </location>
</feature>
<feature type="turn" evidence="38">
    <location>
        <begin position="170"/>
        <end position="173"/>
    </location>
</feature>
<feature type="strand" evidence="37">
    <location>
        <begin position="174"/>
        <end position="182"/>
    </location>
</feature>
<feature type="strand" evidence="37">
    <location>
        <begin position="184"/>
        <end position="194"/>
    </location>
</feature>
<feature type="strand" evidence="37">
    <location>
        <begin position="200"/>
        <end position="218"/>
    </location>
</feature>
<feature type="strand" evidence="38">
    <location>
        <begin position="222"/>
        <end position="227"/>
    </location>
</feature>
<feature type="helix" evidence="36">
    <location>
        <begin position="709"/>
        <end position="728"/>
    </location>
</feature>
<feature type="strand" evidence="36">
    <location>
        <begin position="731"/>
        <end position="733"/>
    </location>
</feature>
<evidence type="ECO:0000250" key="1">
    <source>
        <dbReference type="UniProtKB" id="P51866"/>
    </source>
</evidence>
<evidence type="ECO:0000250" key="2">
    <source>
        <dbReference type="UniProtKB" id="Q08481"/>
    </source>
</evidence>
<evidence type="ECO:0000255" key="3"/>
<evidence type="ECO:0000255" key="4">
    <source>
        <dbReference type="PROSITE-ProRule" id="PRU00114"/>
    </source>
</evidence>
<evidence type="ECO:0000256" key="5">
    <source>
        <dbReference type="SAM" id="MobiDB-lite"/>
    </source>
</evidence>
<evidence type="ECO:0000269" key="6">
    <source>
    </source>
</evidence>
<evidence type="ECO:0000269" key="7">
    <source>
    </source>
</evidence>
<evidence type="ECO:0000269" key="8">
    <source>
    </source>
</evidence>
<evidence type="ECO:0000269" key="9">
    <source>
    </source>
</evidence>
<evidence type="ECO:0000269" key="10">
    <source>
    </source>
</evidence>
<evidence type="ECO:0000269" key="11">
    <source>
    </source>
</evidence>
<evidence type="ECO:0000269" key="12">
    <source>
    </source>
</evidence>
<evidence type="ECO:0000269" key="13">
    <source>
    </source>
</evidence>
<evidence type="ECO:0000269" key="14">
    <source>
    </source>
</evidence>
<evidence type="ECO:0000269" key="15">
    <source>
    </source>
</evidence>
<evidence type="ECO:0000269" key="16">
    <source>
    </source>
</evidence>
<evidence type="ECO:0000269" key="17">
    <source>
    </source>
</evidence>
<evidence type="ECO:0000269" key="18">
    <source>
    </source>
</evidence>
<evidence type="ECO:0000269" key="19">
    <source>
    </source>
</evidence>
<evidence type="ECO:0000269" key="20">
    <source>
    </source>
</evidence>
<evidence type="ECO:0000269" key="21">
    <source>
    </source>
</evidence>
<evidence type="ECO:0000269" key="22">
    <source>
    </source>
</evidence>
<evidence type="ECO:0000269" key="23">
    <source>
    </source>
</evidence>
<evidence type="ECO:0000269" key="24">
    <source>
    </source>
</evidence>
<evidence type="ECO:0000269" key="25">
    <source>
    </source>
</evidence>
<evidence type="ECO:0000269" key="26">
    <source>
    </source>
</evidence>
<evidence type="ECO:0000269" key="27">
    <source>
    </source>
</evidence>
<evidence type="ECO:0000269" key="28">
    <source>
    </source>
</evidence>
<evidence type="ECO:0000269" key="29">
    <source ref="6"/>
</evidence>
<evidence type="ECO:0000269" key="30">
    <source ref="9"/>
</evidence>
<evidence type="ECO:0000305" key="31"/>
<evidence type="ECO:0000305" key="32">
    <source>
    </source>
</evidence>
<evidence type="ECO:0000305" key="33">
    <source>
    </source>
</evidence>
<evidence type="ECO:0007744" key="34">
    <source>
        <dbReference type="PDB" id="5C14"/>
    </source>
</evidence>
<evidence type="ECO:0007744" key="35">
    <source>
        <dbReference type="PDB" id="5GNI"/>
    </source>
</evidence>
<evidence type="ECO:0007829" key="36">
    <source>
        <dbReference type="PDB" id="2KY5"/>
    </source>
</evidence>
<evidence type="ECO:0007829" key="37">
    <source>
        <dbReference type="PDB" id="5C14"/>
    </source>
</evidence>
<evidence type="ECO:0007829" key="38">
    <source>
        <dbReference type="PDB" id="5GNI"/>
    </source>
</evidence>
<accession>P16284</accession>
<accession>A0A075B738</accession>
<accession>A8K3S7</accession>
<accession>D3DU31</accession>
<accession>Q6LDA9</accession>
<accession>Q8TBH1</accession>
<accession>Q96RF5</accession>
<accession>Q96RF6</accession>
<accession>Q9NP65</accession>
<accession>Q9NPB7</accession>
<accession>Q9NPG9</accession>
<accession>Q9NQS9</accession>
<accession>Q9NQT0</accession>
<accession>Q9NQT1</accession>
<accession>Q9NQT2</accession>
<protein>
    <recommendedName>
        <fullName>Platelet endothelial cell adhesion molecule</fullName>
        <shortName>PECAM-1</shortName>
    </recommendedName>
    <alternativeName>
        <fullName>EndoCAM</fullName>
    </alternativeName>
    <alternativeName>
        <fullName>GPIIA'</fullName>
    </alternativeName>
    <alternativeName>
        <fullName>PECA1</fullName>
    </alternativeName>
    <cdAntigenName>CD31</cdAntigenName>
</protein>
<keyword id="KW-0002">3D-structure</keyword>
<keyword id="KW-0025">Alternative splicing</keyword>
<keyword id="KW-0130">Cell adhesion</keyword>
<keyword id="KW-0965">Cell junction</keyword>
<keyword id="KW-1003">Cell membrane</keyword>
<keyword id="KW-1015">Disulfide bond</keyword>
<keyword id="KW-0325">Glycoprotein</keyword>
<keyword id="KW-0393">Immunoglobulin domain</keyword>
<keyword id="KW-0449">Lipoprotein</keyword>
<keyword id="KW-0472">Membrane</keyword>
<keyword id="KW-0564">Palmitate</keyword>
<keyword id="KW-0581">Phagocytosis</keyword>
<keyword id="KW-0597">Phosphoprotein</keyword>
<keyword id="KW-1267">Proteomics identification</keyword>
<keyword id="KW-1185">Reference proteome</keyword>
<keyword id="KW-0677">Repeat</keyword>
<keyword id="KW-0732">Signal</keyword>
<keyword id="KW-0812">Transmembrane</keyword>
<keyword id="KW-1133">Transmembrane helix</keyword>
<proteinExistence type="evidence at protein level"/>
<gene>
    <name type="primary">PECAM1</name>
</gene>
<reference key="1">
    <citation type="journal article" date="1990" name="J. Exp. Med.">
        <title>Molecular cloning of CD31, a putative intercellular adhesion molecule closely related to carcinoembryonic antigen.</title>
        <authorList>
            <person name="Simmons D.L."/>
            <person name="Walker C."/>
            <person name="Power C."/>
            <person name="Pigott R."/>
        </authorList>
    </citation>
    <scope>NUCLEOTIDE SEQUENCE [MRNA] (ISOFORM LONG)</scope>
</reference>
<reference key="2">
    <citation type="journal article" date="1990" name="J. Immunol.">
        <title>Molecular characterization and functional analysis of the leukocyte surface protein CD31.</title>
        <authorList>
            <person name="Stockinger H."/>
            <person name="Gadd S.J."/>
            <person name="Eher R."/>
            <person name="Majdic O."/>
            <person name="Kasinrek W."/>
            <person name="Schreiber W."/>
            <person name="Strass B."/>
            <person name="Schnabl E."/>
            <person name="Knapp W."/>
        </authorList>
    </citation>
    <scope>NUCLEOTIDE SEQUENCE [MRNA] (ISOFORM LONG)</scope>
    <scope>VARIANTS ASN-563 AND GLY-670</scope>
</reference>
<reference key="3">
    <citation type="journal article" date="1990" name="Science">
        <title>PECAM-1 (CD31) cloning and relation to adhesion molecules of the immunoglobulin gene superfamily.</title>
        <authorList>
            <person name="Newman P.J."/>
            <person name="Berndt M.C."/>
            <person name="Gorski J."/>
            <person name="White J.C. II"/>
            <person name="Lyman S."/>
            <person name="Paddock C."/>
            <person name="Muller W.A."/>
        </authorList>
    </citation>
    <scope>NUCLEOTIDE SEQUENCE [MRNA] (ISOFORM LONG)</scope>
    <scope>VARIANT LEU-125</scope>
</reference>
<reference key="4">
    <citation type="journal article" date="1991" name="J. Cell Biol.">
        <title>Molecular and cellular properties of PECAM-1 (endoCAM/CD31): a novel vascular cell-cell adhesion molecule.</title>
        <authorList>
            <person name="Albelda S.M."/>
            <person name="Muller W.A."/>
            <person name="Buck C.A."/>
            <person name="Newman P.J."/>
        </authorList>
    </citation>
    <scope>NUCLEOTIDE SEQUENCE [MRNA] (ISOFORM LONG)</scope>
</reference>
<reference key="5">
    <citation type="journal article" date="1994" name="Blood">
        <title>Organization of the gene for human platelet/endothelial cell adhesion molecule-1 shows alternatively spliced isoforms and a functionally complex cytoplasmic domain.</title>
        <authorList>
            <person name="Kirschbaum N.E."/>
            <person name="Gumina R.J."/>
            <person name="Newman P.J."/>
        </authorList>
    </citation>
    <scope>NUCLEOTIDE SEQUENCE [GENOMIC DNA] (ISOFORM LONG)</scope>
    <scope>VARIANT ASN-563</scope>
</reference>
<reference key="6">
    <citation type="submission" date="2011-12" db="EMBL/GenBank/DDBJ databases">
        <title>Gene cloning and sequence analysis of human nasopharyngeal carcinoma resistance cells CNE1/R platelet/endothelial cell adhesion molecule.</title>
        <authorList>
            <person name="Wang R.-Y."/>
            <person name="Lun Y.-Z."/>
            <person name="Jiang Z.-X."/>
            <person name="Li X."/>
        </authorList>
    </citation>
    <scope>NUCLEOTIDE SEQUENCE [MRNA] (ISOFORM LONG)</scope>
    <scope>VARIANTS ASN-563 AND GLY-670</scope>
</reference>
<reference key="7">
    <citation type="journal article" date="2004" name="Nat. Genet.">
        <title>Complete sequencing and characterization of 21,243 full-length human cDNAs.</title>
        <authorList>
            <person name="Ota T."/>
            <person name="Suzuki Y."/>
            <person name="Nishikawa T."/>
            <person name="Otsuki T."/>
            <person name="Sugiyama T."/>
            <person name="Irie R."/>
            <person name="Wakamatsu A."/>
            <person name="Hayashi K."/>
            <person name="Sato H."/>
            <person name="Nagai K."/>
            <person name="Kimura K."/>
            <person name="Makita H."/>
            <person name="Sekine M."/>
            <person name="Obayashi M."/>
            <person name="Nishi T."/>
            <person name="Shibahara T."/>
            <person name="Tanaka T."/>
            <person name="Ishii S."/>
            <person name="Yamamoto J."/>
            <person name="Saito K."/>
            <person name="Kawai Y."/>
            <person name="Isono Y."/>
            <person name="Nakamura Y."/>
            <person name="Nagahari K."/>
            <person name="Murakami K."/>
            <person name="Yasuda T."/>
            <person name="Iwayanagi T."/>
            <person name="Wagatsuma M."/>
            <person name="Shiratori A."/>
            <person name="Sudo H."/>
            <person name="Hosoiri T."/>
            <person name="Kaku Y."/>
            <person name="Kodaira H."/>
            <person name="Kondo H."/>
            <person name="Sugawara M."/>
            <person name="Takahashi M."/>
            <person name="Kanda K."/>
            <person name="Yokoi T."/>
            <person name="Furuya T."/>
            <person name="Kikkawa E."/>
            <person name="Omura Y."/>
            <person name="Abe K."/>
            <person name="Kamihara K."/>
            <person name="Katsuta N."/>
            <person name="Sato K."/>
            <person name="Tanikawa M."/>
            <person name="Yamazaki M."/>
            <person name="Ninomiya K."/>
            <person name="Ishibashi T."/>
            <person name="Yamashita H."/>
            <person name="Murakawa K."/>
            <person name="Fujimori K."/>
            <person name="Tanai H."/>
            <person name="Kimata M."/>
            <person name="Watanabe M."/>
            <person name="Hiraoka S."/>
            <person name="Chiba Y."/>
            <person name="Ishida S."/>
            <person name="Ono Y."/>
            <person name="Takiguchi S."/>
            <person name="Watanabe S."/>
            <person name="Yosida M."/>
            <person name="Hotuta T."/>
            <person name="Kusano J."/>
            <person name="Kanehori K."/>
            <person name="Takahashi-Fujii A."/>
            <person name="Hara H."/>
            <person name="Tanase T.-O."/>
            <person name="Nomura Y."/>
            <person name="Togiya S."/>
            <person name="Komai F."/>
            <person name="Hara R."/>
            <person name="Takeuchi K."/>
            <person name="Arita M."/>
            <person name="Imose N."/>
            <person name="Musashino K."/>
            <person name="Yuuki H."/>
            <person name="Oshima A."/>
            <person name="Sasaki N."/>
            <person name="Aotsuka S."/>
            <person name="Yoshikawa Y."/>
            <person name="Matsunawa H."/>
            <person name="Ichihara T."/>
            <person name="Shiohata N."/>
            <person name="Sano S."/>
            <person name="Moriya S."/>
            <person name="Momiyama H."/>
            <person name="Satoh N."/>
            <person name="Takami S."/>
            <person name="Terashima Y."/>
            <person name="Suzuki O."/>
            <person name="Nakagawa S."/>
            <person name="Senoh A."/>
            <person name="Mizoguchi H."/>
            <person name="Goto Y."/>
            <person name="Shimizu F."/>
            <person name="Wakebe H."/>
            <person name="Hishigaki H."/>
            <person name="Watanabe T."/>
            <person name="Sugiyama A."/>
            <person name="Takemoto M."/>
            <person name="Kawakami B."/>
            <person name="Yamazaki M."/>
            <person name="Watanabe K."/>
            <person name="Kumagai A."/>
            <person name="Itakura S."/>
            <person name="Fukuzumi Y."/>
            <person name="Fujimori Y."/>
            <person name="Komiyama M."/>
            <person name="Tashiro H."/>
            <person name="Tanigami A."/>
            <person name="Fujiwara T."/>
            <person name="Ono T."/>
            <person name="Yamada K."/>
            <person name="Fujii Y."/>
            <person name="Ozaki K."/>
            <person name="Hirao M."/>
            <person name="Ohmori Y."/>
            <person name="Kawabata A."/>
            <person name="Hikiji T."/>
            <person name="Kobatake N."/>
            <person name="Inagaki H."/>
            <person name="Ikema Y."/>
            <person name="Okamoto S."/>
            <person name="Okitani R."/>
            <person name="Kawakami T."/>
            <person name="Noguchi S."/>
            <person name="Itoh T."/>
            <person name="Shigeta K."/>
            <person name="Senba T."/>
            <person name="Matsumura K."/>
            <person name="Nakajima Y."/>
            <person name="Mizuno T."/>
            <person name="Morinaga M."/>
            <person name="Sasaki M."/>
            <person name="Togashi T."/>
            <person name="Oyama M."/>
            <person name="Hata H."/>
            <person name="Watanabe M."/>
            <person name="Komatsu T."/>
            <person name="Mizushima-Sugano J."/>
            <person name="Satoh T."/>
            <person name="Shirai Y."/>
            <person name="Takahashi Y."/>
            <person name="Nakagawa K."/>
            <person name="Okumura K."/>
            <person name="Nagase T."/>
            <person name="Nomura N."/>
            <person name="Kikuchi H."/>
            <person name="Masuho Y."/>
            <person name="Yamashita R."/>
            <person name="Nakai K."/>
            <person name="Yada T."/>
            <person name="Nakamura Y."/>
            <person name="Ohara O."/>
            <person name="Isogai T."/>
            <person name="Sugano S."/>
        </authorList>
    </citation>
    <scope>NUCLEOTIDE SEQUENCE [LARGE SCALE MRNA] (ISOFORM LONG)</scope>
    <scope>VARIANTS ASN-563 AND GLY-670</scope>
    <source>
        <tissue>Lung</tissue>
    </source>
</reference>
<reference key="8">
    <citation type="journal article" date="2006" name="Nature">
        <title>DNA sequence of human chromosome 17 and analysis of rearrangement in the human lineage.</title>
        <authorList>
            <person name="Zody M.C."/>
            <person name="Garber M."/>
            <person name="Adams D.J."/>
            <person name="Sharpe T."/>
            <person name="Harrow J."/>
            <person name="Lupski J.R."/>
            <person name="Nicholson C."/>
            <person name="Searle S.M."/>
            <person name="Wilming L."/>
            <person name="Young S.K."/>
            <person name="Abouelleil A."/>
            <person name="Allen N.R."/>
            <person name="Bi W."/>
            <person name="Bloom T."/>
            <person name="Borowsky M.L."/>
            <person name="Bugalter B.E."/>
            <person name="Butler J."/>
            <person name="Chang J.L."/>
            <person name="Chen C.-K."/>
            <person name="Cook A."/>
            <person name="Corum B."/>
            <person name="Cuomo C.A."/>
            <person name="de Jong P.J."/>
            <person name="DeCaprio D."/>
            <person name="Dewar K."/>
            <person name="FitzGerald M."/>
            <person name="Gilbert J."/>
            <person name="Gibson R."/>
            <person name="Gnerre S."/>
            <person name="Goldstein S."/>
            <person name="Grafham D.V."/>
            <person name="Grocock R."/>
            <person name="Hafez N."/>
            <person name="Hagopian D.S."/>
            <person name="Hart E."/>
            <person name="Norman C.H."/>
            <person name="Humphray S."/>
            <person name="Jaffe D.B."/>
            <person name="Jones M."/>
            <person name="Kamal M."/>
            <person name="Khodiyar V.K."/>
            <person name="LaButti K."/>
            <person name="Laird G."/>
            <person name="Lehoczky J."/>
            <person name="Liu X."/>
            <person name="Lokyitsang T."/>
            <person name="Loveland J."/>
            <person name="Lui A."/>
            <person name="Macdonald P."/>
            <person name="Major J.E."/>
            <person name="Matthews L."/>
            <person name="Mauceli E."/>
            <person name="McCarroll S.A."/>
            <person name="Mihalev A.H."/>
            <person name="Mudge J."/>
            <person name="Nguyen C."/>
            <person name="Nicol R."/>
            <person name="O'Leary S.B."/>
            <person name="Osoegawa K."/>
            <person name="Schwartz D.C."/>
            <person name="Shaw-Smith C."/>
            <person name="Stankiewicz P."/>
            <person name="Steward C."/>
            <person name="Swarbreck D."/>
            <person name="Venkataraman V."/>
            <person name="Whittaker C.A."/>
            <person name="Yang X."/>
            <person name="Zimmer A.R."/>
            <person name="Bradley A."/>
            <person name="Hubbard T."/>
            <person name="Birren B.W."/>
            <person name="Rogers J."/>
            <person name="Lander E.S."/>
            <person name="Nusbaum C."/>
        </authorList>
    </citation>
    <scope>NUCLEOTIDE SEQUENCE [LARGE SCALE GENOMIC DNA]</scope>
</reference>
<reference key="9">
    <citation type="submission" date="2005-09" db="EMBL/GenBank/DDBJ databases">
        <authorList>
            <person name="Mural R.J."/>
            <person name="Istrail S."/>
            <person name="Sutton G."/>
            <person name="Florea L."/>
            <person name="Halpern A.L."/>
            <person name="Mobarry C.M."/>
            <person name="Lippert R."/>
            <person name="Walenz B."/>
            <person name="Shatkay H."/>
            <person name="Dew I."/>
            <person name="Miller J.R."/>
            <person name="Flanigan M.J."/>
            <person name="Edwards N.J."/>
            <person name="Bolanos R."/>
            <person name="Fasulo D."/>
            <person name="Halldorsson B.V."/>
            <person name="Hannenhalli S."/>
            <person name="Turner R."/>
            <person name="Yooseph S."/>
            <person name="Lu F."/>
            <person name="Nusskern D.R."/>
            <person name="Shue B.C."/>
            <person name="Zheng X.H."/>
            <person name="Zhong F."/>
            <person name="Delcher A.L."/>
            <person name="Huson D.H."/>
            <person name="Kravitz S.A."/>
            <person name="Mouchard L."/>
            <person name="Reinert K."/>
            <person name="Remington K.A."/>
            <person name="Clark A.G."/>
            <person name="Waterman M.S."/>
            <person name="Eichler E.E."/>
            <person name="Adams M.D."/>
            <person name="Hunkapiller M.W."/>
            <person name="Myers E.W."/>
            <person name="Venter J.C."/>
        </authorList>
    </citation>
    <scope>NUCLEOTIDE SEQUENCE [LARGE SCALE GENOMIC DNA]</scope>
    <scope>VARIANTS ASN-563 AND GLY-670</scope>
</reference>
<reference key="10">
    <citation type="journal article" date="2004" name="Genome Res.">
        <title>The status, quality, and expansion of the NIH full-length cDNA project: the Mammalian Gene Collection (MGC).</title>
        <authorList>
            <consortium name="The MGC Project Team"/>
        </authorList>
    </citation>
    <scope>NUCLEOTIDE SEQUENCE [LARGE SCALE MRNA] (ISOFORM LONG)</scope>
    <scope>VARIANTS ASN-563 AND GLY-670</scope>
    <source>
        <tissue>Brain</tissue>
    </source>
</reference>
<reference key="11">
    <citation type="journal article" date="2007" name="Tissue Antigens">
        <title>CD31/PECAM-1 genotyping and haplotype analyses show population diversity.</title>
        <authorList>
            <person name="Robbins F.-M."/>
            <person name="Hartzman R.J."/>
        </authorList>
    </citation>
    <scope>NUCLEOTIDE SEQUENCE [MRNA] OF 1-734 (ISOFORM LONG)</scope>
    <scope>VARIANTS LEU-125; ASN-563 AND GLY-670</scope>
</reference>
<reference key="12">
    <citation type="journal article" date="1993" name="J. Biol. Chem.">
        <title>Identification of PECAM-1 in solid tumor cells and its potential involvement in tumor cell adhesion to endothelium.</title>
        <authorList>
            <person name="Tang D.G."/>
            <person name="Chen Y.Q."/>
            <person name="Newman P.J."/>
            <person name="Shi L."/>
            <person name="Gao X."/>
            <person name="Diglio C.A."/>
            <person name="Honn K.V."/>
        </authorList>
    </citation>
    <scope>NUCLEOTIDE SEQUENCE [MRNA] OF 507-584</scope>
</reference>
<reference key="13">
    <citation type="journal article" date="1997" name="J. Cell Biol.">
        <title>Tyrosine residue in exon 14 of the cytoplasmic domain of platelet endothelial cell adhesion molecule-1 (PECAM-1/CD31) regulates ligand binding specificity.</title>
        <authorList>
            <person name="Famiglietti J."/>
            <person name="Sun J."/>
            <person name="DeLisser H.M."/>
            <person name="Albelda S.M."/>
        </authorList>
    </citation>
    <scope>PHOSPHORYLATION AT TYR-713</scope>
</reference>
<reference key="14">
    <citation type="journal article" date="2002" name="Nature">
        <title>Apoptosis disables CD31-mediated cell detachment from phagocytes promoting binding and engulfment.</title>
        <authorList>
            <person name="Brown S."/>
            <person name="Heinisch I."/>
            <person name="Ross E."/>
            <person name="Shaw K."/>
            <person name="Buckley C.D."/>
            <person name="Savill J."/>
        </authorList>
    </citation>
    <scope>FUNCTION</scope>
</reference>
<reference key="15">
    <citation type="journal article" date="2003" name="Am. J. Physiol.">
        <title>Tissue-specific distributions of alternatively spliced human PECAM-1 isoforms.</title>
        <authorList>
            <person name="Wang Y."/>
            <person name="Su X."/>
            <person name="Sorenson C.M."/>
            <person name="Sheibani N."/>
        </authorList>
    </citation>
    <scope>ALTERNATIVE SPLICING</scope>
    <scope>TISSUE SPECIFICITY</scope>
</reference>
<reference key="16">
    <citation type="journal article" date="2006" name="Thromb. Haemost.">
        <title>Palmitoylation at Cys595 is essential for PECAM-1 localisation into membrane microdomains and for efficient PECAM-1-mediated cytoprotection.</title>
        <authorList>
            <person name="Sardjono C.T."/>
            <person name="Harbour S.N."/>
            <person name="Yip J.C."/>
            <person name="Paddock C."/>
            <person name="Tridandapani S."/>
            <person name="Newman P.J."/>
            <person name="Jackson D.E."/>
        </authorList>
    </citation>
    <scope>PALMITOYLATION AT CYS-622</scope>
    <scope>MUTAGENESIS OF CYS-622</scope>
    <scope>SUBCELLULAR LOCATION</scope>
</reference>
<reference key="17">
    <citation type="journal article" date="2007" name="J. Biol. Chem.">
        <title>The neutrophil-specific antigen CD177 is a counter-receptor for platelet endothelial cell adhesion molecule-1 (CD31).</title>
        <authorList>
            <person name="Sachs U.J."/>
            <person name="Andrei-Selmer C.L."/>
            <person name="Maniar A."/>
            <person name="Weiss T."/>
            <person name="Paddock C."/>
            <person name="Orlova V.V."/>
            <person name="Choi E.Y."/>
            <person name="Newman P.J."/>
            <person name="Preissner K.T."/>
            <person name="Chavakis T."/>
            <person name="Santoso S."/>
        </authorList>
    </citation>
    <scope>FUNCTION</scope>
    <scope>INTERACTION WITH CD177</scope>
    <scope>SUBCELLULAR LOCATION</scope>
    <scope>TISSUE SPECIFICITY</scope>
</reference>
<reference key="18">
    <citation type="journal article" date="2008" name="Biochemistry">
        <title>Regulation of G protein-coupled receptor activities by the platelet-endothelial cell adhesion molecule, PECAM-1.</title>
        <authorList>
            <person name="Yeh J.C."/>
            <person name="Otte L.A."/>
            <person name="Frangos J.A."/>
        </authorList>
    </citation>
    <scope>FUNCTION</scope>
    <scope>INTERACTION WITH BDKRB2 AND GNAQ</scope>
</reference>
<reference key="19">
    <citation type="journal article" date="2008" name="J. Cell Biol.">
        <title>Mechanotransduction in an extracted cell model: Fyn drives stretch- and flow-elicited PECAM-1 phosphorylation.</title>
        <authorList>
            <person name="Chiu Y.J."/>
            <person name="McBeath E."/>
            <person name="Fujiwara K."/>
        </authorList>
    </citation>
    <scope>PHOSPHORYLATION</scope>
</reference>
<reference key="20">
    <citation type="journal article" date="2008" name="J. Cell Sci.">
        <title>An alternatively spliced isoform of PECAM-1 is expressed at high levels in human and murine tissues, and suggests a novel role for the C-terminus of PECAM-1 in cytoprotective signaling.</title>
        <authorList>
            <person name="Bergom C."/>
            <person name="Paddock C."/>
            <person name="Gao C."/>
            <person name="Holyst T."/>
            <person name="Newman D.K."/>
            <person name="Newman P.J."/>
        </authorList>
    </citation>
    <scope>ALTERNATIVE SPLICING (ISOFORMS DELTA14-15 AND DELTA15)</scope>
    <scope>FUNCTION (ISOFORM DELTA15)</scope>
    <scope>SUBCELLULAR LOCATION</scope>
    <scope>TISSUE SPECIFICITY</scope>
    <scope>MUTAGENESIS OF TYR-690 AND TYR-713</scope>
    <scope>INTERACTION WITH PTPN11</scope>
</reference>
<reference key="21">
    <citation type="journal article" date="2008" name="J. Proteome Res.">
        <title>Phosphoproteome of resting human platelets.</title>
        <authorList>
            <person name="Zahedi R.P."/>
            <person name="Lewandrowski U."/>
            <person name="Wiesner J."/>
            <person name="Wortelkamp S."/>
            <person name="Moebius J."/>
            <person name="Schuetz C."/>
            <person name="Walter U."/>
            <person name="Gambaryan S."/>
            <person name="Sickmann A."/>
        </authorList>
    </citation>
    <scope>IDENTIFICATION BY MASS SPECTROMETRY [LARGE SCALE ANALYSIS]</scope>
    <source>
        <tissue>Platelet</tissue>
    </source>
</reference>
<reference key="22">
    <citation type="journal article" date="2009" name="J. Immunol.">
        <title>A novel and critical role for tyrosine 663 in platelet endothelial cell adhesion molecule-1 trafficking and transendothelial migration.</title>
        <authorList>
            <person name="Dasgupta B."/>
            <person name="Dufour E."/>
            <person name="Mamdouh Z."/>
            <person name="Muller W.A."/>
        </authorList>
    </citation>
    <scope>FUNCTION</scope>
    <scope>SUBCELLULAR LOCATION</scope>
    <scope>TISSUE SPECIFICITY</scope>
    <scope>PHOSPHORYLATION AT TYR-690 AND TYR-713</scope>
    <scope>MUTAGENESIS OF LYS-89; TYR-690 AND TYR-713</scope>
    <scope>INTERACTION WITH PTPN11</scope>
</reference>
<reference key="23">
    <citation type="journal article" date="2009" name="J. Proteome Res.">
        <title>Glycoproteomics analysis of human liver tissue by combination of multiple enzyme digestion and hydrazide chemistry.</title>
        <authorList>
            <person name="Chen R."/>
            <person name="Jiang X."/>
            <person name="Sun D."/>
            <person name="Han G."/>
            <person name="Wang F."/>
            <person name="Ye M."/>
            <person name="Wang L."/>
            <person name="Zou H."/>
        </authorList>
    </citation>
    <scope>GLYCOSYLATION [LARGE SCALE ANALYSIS] AT ASN-151; ASN-320 AND ASN-453</scope>
    <source>
        <tissue>Liver</tissue>
    </source>
</reference>
<reference key="24">
    <citation type="journal article" date="2009" name="Nat. Biotechnol.">
        <title>Mass-spectrometric identification and relative quantification of N-linked cell surface glycoproteins.</title>
        <authorList>
            <person name="Wollscheid B."/>
            <person name="Bausch-Fluck D."/>
            <person name="Henderson C."/>
            <person name="O'Brien R."/>
            <person name="Bibel M."/>
            <person name="Schiess R."/>
            <person name="Aebersold R."/>
            <person name="Watts J.D."/>
        </authorList>
    </citation>
    <scope>GLYCOSYLATION [LARGE SCALE ANALYSIS] AT ASN-84; ASN-320 AND ASN-551</scope>
    <source>
        <tissue>Leukemic T-cell</tissue>
    </source>
</reference>
<reference key="25">
    <citation type="journal article" date="2009" name="Sci. Signal.">
        <title>Quantitative phosphoproteomic analysis of T cell receptor signaling reveals system-wide modulation of protein-protein interactions.</title>
        <authorList>
            <person name="Mayya V."/>
            <person name="Lundgren D.H."/>
            <person name="Hwang S.-I."/>
            <person name="Rezaul K."/>
            <person name="Wu L."/>
            <person name="Eng J.K."/>
            <person name="Rodionov V."/>
            <person name="Han D.K."/>
        </authorList>
    </citation>
    <scope>IDENTIFICATION BY MASS SPECTROMETRY [LARGE SCALE ANALYSIS]</scope>
    <source>
        <tissue>Leukemic T-cell</tissue>
    </source>
</reference>
<reference key="26">
    <citation type="journal article" date="2012" name="Circ. Res.">
        <title>Endothelial cell palmitoylproteomic identifies novel lipid-modified targets and potential substrates for protein acyl transferases.</title>
        <authorList>
            <person name="Marin E.P."/>
            <person name="Derakhshan B."/>
            <person name="Lam T.T."/>
            <person name="Davalos A."/>
            <person name="Sessa W.C."/>
        </authorList>
    </citation>
    <scope>PALMITOYLATION BY ZDHHC21</scope>
    <scope>SUBCELLULAR LOCATION</scope>
</reference>
<reference key="27">
    <citation type="journal article" date="2014" name="J. Proteomics">
        <title>An enzyme assisted RP-RPLC approach for in-depth analysis of human liver phosphoproteome.</title>
        <authorList>
            <person name="Bian Y."/>
            <person name="Song C."/>
            <person name="Cheng K."/>
            <person name="Dong M."/>
            <person name="Wang F."/>
            <person name="Huang J."/>
            <person name="Sun D."/>
            <person name="Wang L."/>
            <person name="Ye M."/>
            <person name="Zou H."/>
        </authorList>
    </citation>
    <scope>IDENTIFICATION BY MASS SPECTROMETRY [LARGE SCALE ANALYSIS]</scope>
    <source>
        <tissue>Liver</tissue>
    </source>
</reference>
<reference key="28">
    <citation type="journal article" date="2015" name="Proteomics">
        <title>N-terminome analysis of the human mitochondrial proteome.</title>
        <authorList>
            <person name="Vaca Jacome A.S."/>
            <person name="Rabilloud T."/>
            <person name="Schaeffer-Reiss C."/>
            <person name="Rompais M."/>
            <person name="Ayoub D."/>
            <person name="Lane L."/>
            <person name="Bairoch A."/>
            <person name="Van Dorsselaer A."/>
            <person name="Carapito C."/>
        </authorList>
    </citation>
    <scope>IDENTIFICATION BY MASS SPECTROMETRY [LARGE SCALE ANALYSIS]</scope>
</reference>
<reference key="29">
    <citation type="journal article" date="2011" name="Blood">
        <title>Residues within a lipid-associated segment of the PECAM-1 cytoplasmic domain are susceptible to inducible, sequential phosphorylation.</title>
        <authorList>
            <person name="Paddock C."/>
            <person name="Lytle B.L."/>
            <person name="Peterson F.C."/>
            <person name="Holyst T."/>
            <person name="Newman P.J."/>
            <person name="Volkman B.F."/>
            <person name="Newman D.K."/>
        </authorList>
    </citation>
    <scope>STRUCTURE BY NMR OF 686-738</scope>
    <scope>TISSUE SPECIFICITY</scope>
    <scope>MOTIF</scope>
    <scope>PHOSPHORYLATION AT TYR-690; TYR-713; SER-729 AND SER-734</scope>
    <scope>MUTAGENESIS OF TYR-690 AND TYR-713</scope>
</reference>
<reference key="30">
    <citation type="journal article" date="2016" name="Blood">
        <title>Structural basis for PECAM-1 homophilic binding.</title>
        <authorList>
            <person name="Paddock C."/>
            <person name="Zhou D."/>
            <person name="Lertkiatmongkol P."/>
            <person name="Newman P.J."/>
            <person name="Zhu J."/>
        </authorList>
    </citation>
    <scope>X-RAY CRYSTALLOGRAPHY (2.80 ANGSTROMS) OF 28-229</scope>
    <scope>SUBUNIT</scope>
    <scope>GLYCOSYLATION AT ASN-52; ASN-84 AND ASN-151</scope>
    <scope>DISULFIDE BONDS</scope>
</reference>
<reference key="31">
    <citation type="journal article" date="2016" name="Sci. Rep.">
        <title>Structural basis for human PECAM-1-mediated trans-homophilic cell adhesion.</title>
        <authorList>
            <person name="Hu M."/>
            <person name="Zhang H."/>
            <person name="Liu Q."/>
            <person name="Hao Q."/>
        </authorList>
    </citation>
    <scope>X-RAY CRYSTALLOGRAPHY (3.01 ANGSTROMS) OF 28-232</scope>
    <scope>FUNCTION</scope>
    <scope>SUBUNIT</scope>
    <scope>DISULFIDE BONDS</scope>
    <scope>MUTAGENESIS OF ASN-52; LEU-74; ASN-84; ILE-112; ASN-151; PHE-188 AND ILE-190</scope>
</reference>
<reference key="32">
    <citation type="journal article" date="1996" name="N. Engl. J. Med.">
        <title>Polymorphism of adhesion molecule CD31 and its role in acute graft-versus-host disease.</title>
        <authorList>
            <person name="Behar E."/>
            <person name="Chao N.J."/>
            <person name="Hiraki D.D."/>
            <person name="Krishnaswamy S."/>
            <person name="Brown B.W."/>
            <person name="Zehnder J.L."/>
            <person name="Grumet F.C."/>
        </authorList>
    </citation>
    <scope>VARIANT LEU-125</scope>
</reference>
<reference key="33">
    <citation type="journal article" date="2001" name="Am. J. Trop. Med. Hyg.">
        <title>Codon 125 polymorphism of CD31 and susceptibility to malaria.</title>
        <authorList>
            <person name="Casals-Pascual C."/>
            <person name="Allen S."/>
            <person name="Allen A."/>
            <person name="Kai O."/>
            <person name="Lowe B."/>
            <person name="Pain A."/>
            <person name="Roberts D.J."/>
        </authorList>
    </citation>
    <scope>VARIANT LEU-125</scope>
</reference>